<comment type="function">
    <molecule>Mature core protein</molecule>
    <text evidence="2 4 5 6 11 20">Packages viral RNA to form a viral nucleocapsid, and promotes virion budding (Probable). Participates in the viral particle production as a result of its interaction with the non-structural protein 5A (By similarity). Binds RNA and may function as a RNA chaperone to induce the RNA structural rearrangements taking place during virus replication (By similarity). Modulates viral translation initiation by interacting with viral IRES and 40S ribosomal subunit (By similarity). Affects various cell signaling pathways, host immunity and lipid metabolism (Probable). Prevents the establishment of cellular antiviral state by blocking the interferon-alpha/beta (IFN-alpha/beta) and IFN-gamma signaling pathways and by blocking the formation of phosphorylated STAT1 and promoting ubiquitin-mediated proteasome-dependent degradation of STAT1 (By similarity). Activates STAT3 leading to cellular transformation (By similarity). Regulates the activity of cellular genes, including c-myc and c-fos (By similarity). May repress the promoter of p53, and sequester CREB3 and SP110 isoform 3/Sp110b in the cytoplasm (By similarity). Represses cell cycle negative regulating factor CDKN1A, thereby interrupting an important check point of normal cell cycle regulation (By similarity). Targets transcription factors involved in the regulation of inflammatory responses and in the immune response: suppresses TNF-induced NF-kappa-B activation, and activates AP-1 (By similarity). Binds to dendritic cells (DCs) via C1QR1, resulting in down-regulation of T-lymphocytes proliferation (By similarity). Alters lipid metabolism by interacting with hepatocellular proteins involved in lipid accumulation and storage (By similarity). Induces up-regulation of FAS promoter activity, and thereby contributes to the increased triglyceride accumulation in hepatocytes (steatosis) (By similarity).</text>
</comment>
<comment type="function">
    <molecule>Envelope glycoprotein E1</molecule>
    <text evidence="5">Forms a heterodimer with envelope glycoprotein E2, which mediates virus attachment to the host cell, virion internalization through clathrin-dependent endocytosis and fusion with host membrane (By similarity). Fusion with the host cell is most likely mediated by both E1 and E2, through conformational rearrangements of the heterodimer required for fusion rather than a classical class II fusion mechanism (By similarity). E1/E2 heterodimer binds host apolipoproteins such as APOB and ApoE thereby forming a lipo-viro-particle (LVP) (By similarity). APOE associated to the LVP allows the initial virus attachment to cell surface receptors such as the heparan sulfate proteoglycans (HSPGs), syndecan-1 (SDC1), syndecan-1 (SDC2), the low-density lipoprotein receptor (LDLR) and scavenger receptor class B type I (SCARB1) (By similarity). The cholesterol transfer activity of SCARB1 allows E2 exposure and binding of E2 to SCARB1 and the tetraspanin CD81 (By similarity). E1/E2 heterodimer binding on CD81 activates the epithelial growth factor receptor (EGFR) signaling pathway (By similarity). Diffusion of the complex E1-E2-EGFR-SCARB1-CD81 to the cell lateral membrane allows further interaction with Claudin 1 (CLDN1) and occludin (OCLN) to finally trigger HCV entry (By similarity).</text>
</comment>
<comment type="function">
    <molecule>Envelope glycoprotein E2</molecule>
    <text evidence="4 5">Forms a heterodimer with envelope glycoprotein E1, which mediates virus attachment to the host cell, virion internalization through clathrin-dependent endocytosis and fusion with host membrane (By similarity). Fusion with the host cell is most likely mediated by both E1 and E2, through conformational rearrangements of the heterodimer required for fusion rather than a classical class II fusion mechanism (By similarity). The interaction between envelope glycoprotein E2 and host apolipoprotein E/APOE allows the proper assembly, maturation and infectivity of the viral particles (By similarity). This interaction is probably promoted via the up-regulation of cellular autophagy by the virus (By similarity). E1/E2 heterodimer binds host apolipoproteins such as APOB and APOE thereby forming a lipo-viro-particle (LVP) (By similarity). APOE associated to the LVP allows the initial virus attachment to cell surface receptors such as the heparan sulfate proteoglycans (HSPGs), syndecan-1 (SDC1), syndecan-1 (SDC2), the low-density lipoprotein receptor (LDLR) and scavenger receptor class B type I (SCARB1) (By similarity). The cholesterol transfer activity of SCARB1 allows E2 exposure and binding of E2 to SCARB1 and the tetraspanin CD81 (By similarity). E1/E2 heterodimer binding on CD81 activates the epithelial growth factor receptor (EGFR) signaling pathway (By similarity). Diffusion of the complex E1-E2-EGFR-SCARB1-CD81 to the cell lateral membrane allows further interaction with Claudin 1 (CLDN1) and occludin (OCLN) to finally trigger HCV entry (By similarity). Inhibits host EIF2AK2/PKR activation, preventing the establishment of an antiviral state (By similarity). Viral ligand for CD209/DC-SIGN and CLEC4M/DC-SIGNR, which are respectively found on dendritic cells (DCs), and on liver sinusoidal endothelial cells and macrophage-like cells of lymph node sinuses (By similarity). These interactions allow the capture of circulating HCV particles by these cells and subsequent facilitated transmission to permissive cells such as hepatocytes and lymphocyte subpopulations (By similarity). The interaction between E2 and host amino acid transporter complex formed by SLC3A2 and SLC7A5/LAT1 may facilitate viral entry into host cell (By similarity).</text>
</comment>
<comment type="function">
    <molecule>Viroporin p7</molecule>
    <text evidence="5 11 20">Ion channel protein that acts as a viroporin and plays an essential role in the assembly, envelopment and secretion of viral particles (By similarity). Regulates the host cell secretory pathway, which induces the intracellular retention of viral glycoproteins and favors assembly of viral particles (By similarity). Creates a pore in acidic organelles and releases Ca(2+) and H(+) in the cytoplasm of infected cells, leading to a productive viral infection (By similarity). High levels of cytoplasmic Ca(2+) may trigger membrane trafficking and transport of viral ER-associated proteins to viroplasms, sites of viral genome replication (Probable). This ionic imbalance induces the assembly of the inflammasome complex, which triggers the maturation of pro-IL-1beta into IL-1beta through the action of caspase-1 (By similarity). Targets also host mitochondria and induces mitochondrial depolarization (By similarity). In addition of its role as a viroporin, acts as a lipid raft adhesion factor (By similarity).</text>
</comment>
<comment type="function">
    <molecule>Protease NS2</molecule>
    <text evidence="3 5">Cysteine protease required for the proteolytic auto-cleavage between the non-structural proteins NS2 and NS3 (By similarity). The N-terminus of NS3 is required for the function of NS2 protease (active region NS2-3) (By similarity). Promotes the initiation of viral particle assembly by mediating the interaction between structural and non-structural proteins (By similarity).</text>
</comment>
<comment type="function">
    <molecule>Serine protease/helicase NS3</molecule>
    <text evidence="5 12">Displays three enzymatic activities: serine protease with a chymotrypsin-like fold, NTPase and RNA helicase (By similarity). NS3 serine protease, in association with NS4A, is responsible for the cleavages of NS3-NS4A, NS4A-NS4B, NS4B-NS5A and NS5A-NS5B (By similarity). The NS3/NS4A complex prevents phosphorylation of host IRF3, thus preventing the establishment of dsRNA induced antiviral state (By similarity). The NS3/NS4A complex induces host amino acid transporter component SLC3A2, thus contributing to HCV propagation (By similarity). NS3 RNA helicase binds to RNA and unwinds both dsDNA and dsRNA in the 3' to 5' direction, and likely resolves RNA complicated stable secondary structures in the template strand (By similarity). Binds a single ATP and catalyzes the unzipping of a single base pair of dsRNA (By similarity). Inhibits host antiviral proteins TBK1 and IRF3 thereby preventing the establishment of an antiviral state (By similarity). Cleaves host MAVS/CARDIF thereby preventing the establishment of an antiviral state (By similarity). Cleaves host TICAM1/TRIF, thereby disrupting TLR3 signaling and preventing the establishment of an antiviral state (By similarity).</text>
</comment>
<comment type="function">
    <molecule>Non-structural protein 4B</molecule>
    <text evidence="5">Induces a specific membrane alteration that serves as a scaffold for the virus replication complex (By similarity). This membrane alteration gives rise to the so-called ER-derived membranous web that contains the replication complex (By similarity). NS4B self-interaction contributes to its function in membranous web formation (By similarity). Promotes host TRIF protein degradation in a CASP8-dependent manner thereby inhibiting host TLR3-mediated interferon signaling (By similarity). Disrupts the interaction between STING and TBK1 contributing to the inhibition of interferon signaling (By similarity).</text>
</comment>
<comment type="function">
    <molecule>Non-structural protein 5A</molecule>
    <text evidence="2 4 5 11 12">Phosphorylated protein that is indispensable for viral replication and assembly (By similarity). Both hypo- and hyperphosphorylated states are required for the viral life cycle (By similarity). The hyperphosphorylated form of NS5A is an inhibitor of viral replication (By similarity). Involved in RNA-binding and especially in binding to the viral genome (By similarity). Zinc is essential for RNA-binding (By similarity). Participates in the viral particle production as a result of its interaction with the mature viral core protein (By similarity). Its interaction with host VAPB may target the viral replication complex to vesicles (By similarity). Down-regulates viral IRES translation initiation (By similarity). Mediates interferon resistance, presumably by interacting with and inhibiting host EIF2AK2/PKR (By similarity). Prevents BIN1-induced apoptosis (By similarity). Acts as a transcriptional activator of some host genes important for viral replication when localized in the nucleus (By similarity). Via the interaction with host PACSIN2, modulates lipid droplet formation in order to promote virion assembly (By similarity). Modulates TNFRSF21/DR6 signaling pathway for viral propagation (By similarity).</text>
</comment>
<comment type="function">
    <molecule>RNA-directed RNA polymerase</molecule>
    <text evidence="5">RNA-dependent RNA polymerase that performs primer-template recognition and RNA synthesis during viral replication. Initiates RNA transcription/replication at a flavin adenine dinucleotide (FAD), resulting in a 5'- FAD cap on viral RNAs. In this way, recognition of viral 5' RNA by host pattern recognition receptors can be bypassed, thereby evading activation of antiviral pathways.</text>
</comment>
<comment type="catalytic activity">
    <molecule>Serine protease/helicase NS3</molecule>
    <reaction evidence="5">
        <text>Hydrolysis of four peptide bonds in the viral precursor polyprotein, commonly with Asp or Glu in the P6 position, Cys or Thr in P1 and Ser or Ala in P1'.</text>
        <dbReference type="EC" id="3.4.21.98"/>
    </reaction>
</comment>
<comment type="catalytic activity">
    <molecule>Serine protease/helicase NS3</molecule>
    <reaction evidence="5">
        <text>a ribonucleoside 5'-triphosphate + H2O = a ribonucleoside 5'-diphosphate + phosphate + H(+)</text>
        <dbReference type="Rhea" id="RHEA:23680"/>
        <dbReference type="ChEBI" id="CHEBI:15377"/>
        <dbReference type="ChEBI" id="CHEBI:15378"/>
        <dbReference type="ChEBI" id="CHEBI:43474"/>
        <dbReference type="ChEBI" id="CHEBI:57930"/>
        <dbReference type="ChEBI" id="CHEBI:61557"/>
        <dbReference type="EC" id="3.6.1.15"/>
    </reaction>
</comment>
<comment type="catalytic activity">
    <molecule>Serine protease/helicase NS3</molecule>
    <reaction evidence="5">
        <text>ATP + H2O = ADP + phosphate + H(+)</text>
        <dbReference type="Rhea" id="RHEA:13065"/>
        <dbReference type="ChEBI" id="CHEBI:15377"/>
        <dbReference type="ChEBI" id="CHEBI:15378"/>
        <dbReference type="ChEBI" id="CHEBI:30616"/>
        <dbReference type="ChEBI" id="CHEBI:43474"/>
        <dbReference type="ChEBI" id="CHEBI:456216"/>
        <dbReference type="EC" id="3.6.4.13"/>
    </reaction>
</comment>
<comment type="catalytic activity">
    <molecule>RNA-directed RNA polymerase</molecule>
    <reaction evidence="14">
        <text>RNA(n) + a ribonucleoside 5'-triphosphate = RNA(n+1) + diphosphate</text>
        <dbReference type="Rhea" id="RHEA:21248"/>
        <dbReference type="Rhea" id="RHEA-COMP:14527"/>
        <dbReference type="Rhea" id="RHEA-COMP:17342"/>
        <dbReference type="ChEBI" id="CHEBI:33019"/>
        <dbReference type="ChEBI" id="CHEBI:61557"/>
        <dbReference type="ChEBI" id="CHEBI:140395"/>
        <dbReference type="EC" id="2.7.7.48"/>
    </reaction>
</comment>
<comment type="cofactor">
    <molecule>Protease NS2</molecule>
    <cofactor evidence="3">
        <name>Zn(2+)</name>
        <dbReference type="ChEBI" id="CHEBI:29105"/>
    </cofactor>
    <text evidence="3">Activity of protease NS2 is dependent on zinc ions and completely inhibited by EDTA. This is probably due to the fact that NS2 protease activity needs NS3 N-terminus that binds a zinc atom (active region NS2-3).</text>
</comment>
<comment type="cofactor">
    <molecule>Serine protease/helicase NS3</molecule>
    <cofactor evidence="3">
        <name>Zn(2+)</name>
        <dbReference type="ChEBI" id="CHEBI:29105"/>
    </cofactor>
    <cofactor evidence="12">
        <name>Mg(2+)</name>
        <dbReference type="ChEBI" id="CHEBI:18420"/>
    </cofactor>
    <text evidence="3 12">Binds 1 zinc ion, which has a structural role (By similarity). The magnesium ion is essential for the helicase activity (By similarity).</text>
</comment>
<comment type="cofactor">
    <molecule>RNA-directed RNA polymerase</molecule>
    <cofactor evidence="3">
        <name>Mg(2+)</name>
        <dbReference type="ChEBI" id="CHEBI:18420"/>
    </cofactor>
    <text evidence="3">Binds 2 magnesium ion that constitute a dinuclear catalytic metal center.</text>
</comment>
<comment type="activity regulation">
    <molecule>Viroporin p7</molecule>
    <text evidence="2 5">Inhibited by the antiviral drug hexamethylene amiloride (By similarity). Inhibition by amantadine appears to be genotype-dependent (By similarity). Also inhibited by long-alkyl-chain iminosugar derivatives (By similarity).</text>
</comment>
<comment type="activity regulation">
    <molecule>RNA-directed RNA polymerase</molecule>
    <text evidence="5">Activity is up-regulated by PRK2/PKN2-mediated phosphorylation.</text>
</comment>
<comment type="subunit">
    <molecule>Mature core protein</molecule>
    <text evidence="2 4 5 6 8 9 11">Homooligomer (By similarity). Interacts with E1 (via C-terminus) (By similarity). Interacts with the non-structural protein 5A (By similarity). Interacts (via N-terminus) with host STAT1 (via SH2 domain); this interaction results in decreased STAT1 phosphorylation and ubiquitin-mediated proteasome-dependent STAT1 degradation, leading to decreased IFN-stimulated gene transcription (By similarity). Interacts with host STAT3; this interaction constitutively activates STAT3 (By similarity). Interacts with host LTBR receptor (By similarity). Interacts with host TNFRSF1A receptor and possibly induces apoptosis (By similarity). Interacts with host HNRPK (By similarity). Interacts with host YWHAE (By similarity). Interacts with host UBE3A/E6AP (By similarity). Interacts with host DDX3X (By similarity). Interacts with host APOA2 (By similarity). Interacts with host RXRA protein (By similarity). Interacts with host SP110 isoform 3/Sp110b; this interaction sequesters the transcriptional corepressor SP110 away from the nucleus (By similarity). Interacts with host CREB3 nuclear transcription protein; this interaction triggers cell transformation (By similarity). Interacts with host ACY3 (By similarity). Interacts with host C1QR1 (By similarity). Interacts with host RBM24; this interaction, which enhances the interaction of the mature core protein with 5'-UTR, may inhibit viral translation and favor replication (By similarity). Interacts with host EIF2AK2/PKR; this interaction induces the autophosphorylation of EIF2AK2 (By similarity). Part of the viral assembly initiation complex composed of NS2, E1, E2, NS3, NS4A, NS5A and the mature core protein (By similarity).</text>
</comment>
<comment type="subunit">
    <molecule>Envelope glycoprotein E1</molecule>
    <text evidence="5 11">Forms a heterodimer with envelope glycoprotein E2 (By similarity). Interacts with mature core protein (By similarity). Interacts with protease NS2 (By similarity). The heterodimer E1/E2 interacts with host CLDN1; this interaction plays a role in viral entry into host cell (By similarity). Interacts with host SPSB2 (via C-terminus) (By similarity). Part of the viral assembly initiation complex composed of NS2, E1, E2, NS3, NS4A, NS5A and the mature core protein (By similarity). Interacts with host NEURL3; this interaction prevents E1 binding to glycoprotein E2 (By similarity).</text>
</comment>
<comment type="subunit">
    <molecule>Envelope glycoprotein E2</molecule>
    <text evidence="5 11 12">Forms a heterodimer with envelope glycoprotein E1 (By similarity). Interacts with host CD81 and SCARB1 receptors; these interactions play a role in viral entry into host cell (By similarity). Interacts with host EIF2AK2/PKR; this interaction inhibits EIF2AK2 and probably allows the virus to evade the innate immune response (By similarity). Interacts with host CD209/DC-SIGN and CLEC4M/DC-SIGNR (By similarity). Interact with host SPCS1; this interaction is essential for viral particle assembly (By similarity). Interacts with protease NS2 (By similarity). The heterodimer E1/E2 interacts with host CLDN1; this interaction plays a role in viral entry into host cell (By similarity). Part of the viral assembly initiation complex composed of NS2, E1, E2, NS3, NS4A, NS5A and the mature core protein (By similarity). Interacts with host SLC3A2/4F2hc; the interaction may facilitate viral entry into host cell (By similarity). Interacts with human PLSCR1 (By similarity).</text>
</comment>
<comment type="subunit">
    <molecule>Viroporin p7</molecule>
    <text evidence="1 5 11">Homohexamer (By similarity). Homoheptamer (By similarity). Interacts with protease NS2 (By similarity).</text>
</comment>
<comment type="subunit">
    <molecule>Protease NS2</molecule>
    <text evidence="5 11">Homodimer (By similarity). Interacts with host SPCS1; this interaction is essential for viral particle assembly (By similarity). Interacts with envelope glycoprotein E1 (By similarity). Interacts with envelope glycoprotein E2 (By similarity). Interacts with viroporin p7 (By similarity). Interacts with serine protease/helicase NS3 (By similarity). Part of the replication complex composed of NS2, NS3, NS4A, NS4B, NS5A and the RNA-directed RNA polymerase embedded in an ER-derived membranous web (By similarity). Part of the viral assembly initiation complex composed of NS2, E1, E2, NS3, NS4A, NS5A and the mature core protein (By similarity).</text>
</comment>
<comment type="subunit">
    <molecule>Serine protease/helicase NS3</molecule>
    <text evidence="3 5 11 12">Interacts with protease NS2 (By similarity). Interacts with non-structural protein 4A; this interaction stabilizes the folding of NS3 serine protease (By similarity). NS3-NS4A interaction is essential for NS3 activation and allows membrane anchorage of the latter (By similarity). NS3/NS4A complex also prevents phosphorylation of host IRF3, thus preventing the establishment of dsRNA induced antiviral state (By similarity). Interacts with host MAVS; this interaction leads to the cleavage and inhibition of host MAVS (By similarity). Interacts with host TICAM1; this interaction leads to the cleavage and inhibition of host TICAM1 (By similarity). Interacts with host TANK-binding kinase/TBK1; this interaction results in the inhibition of the association between TBK1 and IRF3, which leads to the inhibition of IRF3 activation (By similarity). Interacts with host RBM24 (By similarity). Part of the replication complex composed of NS2, NS3, NS4A, NS4B, NS5A and the RNA-directed RNA polymerase embedded in an ER-derived membranous web (By similarity). Part of the viral assembly initiation complex composed of NS2, E1, E2, NS3, NS4A, NS5A and the mature core protein (By similarity).</text>
</comment>
<comment type="subunit">
    <molecule>Non-structural protein 4A</molecule>
    <text evidence="2 3 5 11">Interacts with NS3 serine protease; this interaction stabilizes the folding of NS3 serine protease (By similarity). NS3-NS4A interaction is essential for NS3 activation and allows membrane anchorage of the latter (By similarity). Interacts with non-structural protein 5A (via N-terminus) (By similarity). Part of the replication complex composed of NS2, NS3, NS4A, NS4B, NS5A and the RNA-directed RNA polymerase embedded in an ER-derived membranous web (By similarity). Part of the viral assembly initiation complex composed of NS2, E1, E2, NS3, NS4A, NS5A and the mature core protein (By similarity).</text>
</comment>
<comment type="subunit">
    <molecule>Non-structural protein 4B</molecule>
    <text evidence="5 11">Homomultimer (By similarity). Interacts with non-structural protein NS5A (By similarity). Interacts with host PLA2G4C; this interaction likely initiates the recruitment of replication complexes to lipid droplets (By similarity). Interacts with host STING; this interaction disrupts the interaction between STING and TBK1 thereby suppressing the interferon signaling (By similarity). Part of the replication complex composed of NS2, NS3, NS4A, NS4B, NS5A and the RNA-directed RNA polymerase embedded in an ER-derived membranous web (By similarity).</text>
</comment>
<comment type="subunit">
    <molecule>Non-structural protein 5A</molecule>
    <text evidence="2 3 4 5 11">Monomer. Homodimer; dimerization is required for RNA-binding (By similarity). Interacts with the mature core protein (By similarity). Interacts (via N-terminus) with non-structural protein 4A (By similarity). Interacts with non-structural protein 4B. Interacts (via region D2) with RNA-directed RNA polymerase (By similarity). Part of the viral assembly initiation complex composed of NS2, E1, E2, NS3, NS4A, NS5A and the mature core protein (By similarity). Part of the replication complex composed of NS2, NS3, NS4A, NS4B, NS5A and the RNA-directed RNA polymerase embedded in an ER-derived membranous web (By similarity). Interacts with host GRB2 (By similarity). Interacts with host BIN1 (By similarity). Interacts with host PIK3R1 (By similarity). Interacts with host SRCAP (By similarity). Interacts with host FKBP8 (By similarity). Interacts (via C-terminus) with host VAPB (via MSP domain). Interacts with host EIF2AK2/PKR; this interaction leads to disruption of EIF2AK2 dimerization by NS5A and probably allows the virus to evade the innate immune response. Interacts (via N-terminus) with host PACSIN2 (via N-terminus); this interaction attenuates protein kinase C alpha-mediated phosphorylation of PACSIN2 by disrupting the interaction between PACSIN2 and PRKCA (By similarity). Interacts (via N-terminus) with host SRC kinase (via SH2 domain) (By similarity). Interacts with most Src-family kinases (By similarity). Interacts with host IFI27 and SKP2; promotes the ubiquitin-mediated proteasomal degradation of NS5A (By similarity). Interacts with host GPS2 (By similarity). Interacts with host TNFRSF21; this interaction allows the modulation by the virus of JNK, p38 MAPK, STAT3, and Akt signaling pathways in a DR6-dependent manner. Interacts (via N-terminus) with host CIDEB (via N-terminus); this interaction seems to regulate the association of HCV particles with APOE (By similarity). Interacts with host CHKA/Choline Kinase-alpha; CHKA bridges host PI4KA and NS5A and potentiates NS5A-stimulated PI4KA activity, which then facilitates the targeting of the ternary complex to the ER for viral replication (By similarity). Interacts with host SPSB2 (via C-terminus); this interaction targets NS5A for ubiquitination and degradation (By similarity). Interacts with host RAB18; this interaction may promote the association of NS5A and other replicase components with lipid droplets (By similarity). Interacts (via region D2) with host PPIA/CYPA; the interaction stimulates RNA-binding ability of NS5A and is dependent on the peptidyl-prolyl cis-trans isomerase activity of PPIA/CYPA. Interacts with host TRIM14; this interaction induces the degradation of NS5A (By similarity).</text>
</comment>
<comment type="subunit">
    <molecule>RNA-directed RNA polymerase</molecule>
    <text evidence="5">Homooligomer (By similarity). Interacts with non-structural protein 5A (By similarity). Interacts with host VAPB (By similarity). Interacts with host PRK2/PKN2 (By similarity). Interacts with host HNRNPA1 and SEPT6; these interactions facilitate viral replication (By similarity). Part of the replication complex composed of NS2, NS3, NS4A, NS4B, NS5A and the RNA-directed RNA polymerase (By similarity).</text>
</comment>
<comment type="subcellular location">
    <molecule>Core protein precursor</molecule>
    <subcellularLocation>
        <location evidence="4">Host endoplasmic reticulum membrane</location>
        <topology evidence="13">Single-pass membrane protein</topology>
    </subcellularLocation>
    <subcellularLocation>
        <location evidence="4">Host mitochondrion membrane</location>
        <topology evidence="13">Single-pass type I membrane protein</topology>
    </subcellularLocation>
    <text>The C-terminal transmembrane domain of the core protein precursor contains an ER signal leading the nascent polyprotein to the ER membrane.</text>
</comment>
<comment type="subcellular location">
    <molecule>Mature core protein</molecule>
    <subcellularLocation>
        <location evidence="11">Virion</location>
    </subcellularLocation>
    <subcellularLocation>
        <location evidence="11">Host cytoplasm</location>
    </subcellularLocation>
    <subcellularLocation>
        <location evidence="2">Host nucleus</location>
    </subcellularLocation>
    <subcellularLocation>
        <location evidence="11">Host lipid droplet</location>
    </subcellularLocation>
    <text evidence="5">Only a minor proportion of core protein is present in the nucleus (By similarity). Probably present on the surface of lipid droplets (By similarity).</text>
</comment>
<comment type="subcellular location">
    <molecule>Envelope glycoprotein E1</molecule>
    <subcellularLocation>
        <location evidence="20">Virion membrane</location>
        <topology evidence="20">Single-pass type I membrane protein</topology>
    </subcellularLocation>
    <subcellularLocation>
        <location>Host endoplasmic reticulum membrane</location>
        <topology evidence="5">Single-pass type I membrane protein</topology>
    </subcellularLocation>
    <text evidence="5">The C-terminal transmembrane domain acts as a signal sequence and forms a hairpin structure before cleavage by host signal peptidase (By similarity). After cleavage, the membrane sequence is retained at the C-terminus of the protein, serving as ER membrane anchor (By similarity). A reorientation of the second hydrophobic stretch occurs after cleavage producing a single reoriented transmembrane domain (By similarity). These events explain the final topology of the protein (By similarity).</text>
</comment>
<comment type="subcellular location">
    <molecule>Envelope glycoprotein E2</molecule>
    <subcellularLocation>
        <location evidence="20">Virion membrane</location>
        <topology evidence="20">Single-pass type I membrane protein</topology>
    </subcellularLocation>
    <subcellularLocation>
        <location>Host endoplasmic reticulum membrane</location>
        <topology evidence="5">Single-pass type I membrane protein</topology>
    </subcellularLocation>
    <subcellularLocation>
        <location evidence="12">Host lipid droplet</location>
    </subcellularLocation>
    <text evidence="5">The C-terminal transmembrane domain acts as a signal sequence and forms a hairpin structure before cleavage by host signal peptidase (By similarity). After cleavage, the membrane sequence is retained at the C-terminus of the protein, serving as ER membrane anchor (By similarity). A reorientation of the second hydrophobic stretch occurs after cleavage producing a single reoriented transmembrane domain (By similarity). These events explain the final topology of the protein (By similarity).</text>
</comment>
<comment type="subcellular location">
    <molecule>Viroporin p7</molecule>
    <subcellularLocation>
        <location evidence="5">Host endoplasmic reticulum membrane</location>
        <topology evidence="5">Multi-pass membrane protein</topology>
    </subcellularLocation>
    <subcellularLocation>
        <location evidence="5">Host mitochondrion</location>
    </subcellularLocation>
    <subcellularLocation>
        <location evidence="5">Host cell membrane</location>
    </subcellularLocation>
    <text evidence="5">The C-terminus of p7 membrane domain acts as a signal sequence (By similarity). After cleavage by host signal peptidase, the membrane sequence is retained at the C-terminus of the protein, serving as ER membrane anchor (By similarity). ER retention of p7 is leaky and a small fraction reaches the plasma membrane (By similarity).</text>
</comment>
<comment type="subcellular location">
    <molecule>Protease NS2</molecule>
    <subcellularLocation>
        <location evidence="5">Host endoplasmic reticulum membrane</location>
        <topology evidence="5">Multi-pass membrane protein</topology>
    </subcellularLocation>
    <subcellularLocation>
        <location evidence="12">Host lipid droplet</location>
    </subcellularLocation>
    <text evidence="11">Probably present on the surface of lipid droplets.</text>
</comment>
<comment type="subcellular location">
    <molecule>Serine protease/helicase NS3</molecule>
    <subcellularLocation>
        <location evidence="20">Host endoplasmic reticulum membrane</location>
        <topology evidence="20">Peripheral membrane protein</topology>
    </subcellularLocation>
    <text evidence="20">NS3 is associated to the ER membrane through its binding to NS4A.</text>
</comment>
<comment type="subcellular location">
    <molecule>Non-structural protein 4A</molecule>
    <subcellularLocation>
        <location evidence="20">Host endoplasmic reticulum membrane</location>
        <topology evidence="20">Single-pass type I membrane protein</topology>
    </subcellularLocation>
    <text>Host membrane insertion occurs after processing by the NS3 protease.</text>
</comment>
<comment type="subcellular location">
    <molecule>Non-structural protein 4B</molecule>
    <subcellularLocation>
        <location evidence="5">Host endoplasmic reticulum membrane</location>
        <topology evidence="5">Multi-pass membrane protein</topology>
    </subcellularLocation>
    <text evidence="5">A reorientation of the N-terminus into the ER lumen occurs post-translationally.</text>
</comment>
<comment type="subcellular location">
    <molecule>Non-structural protein 5A</molecule>
    <subcellularLocation>
        <location evidence="5">Host endoplasmic reticulum membrane</location>
        <topology evidence="5">Peripheral membrane protein</topology>
    </subcellularLocation>
    <subcellularLocation>
        <location evidence="5">Host cytoplasm</location>
        <location evidence="5">Host perinuclear region</location>
    </subcellularLocation>
    <subcellularLocation>
        <location evidence="2">Host mitochondrion</location>
    </subcellularLocation>
    <subcellularLocation>
        <location evidence="5">Host cytoplasm</location>
    </subcellularLocation>
    <subcellularLocation>
        <location evidence="2">Host nucleus</location>
    </subcellularLocation>
    <subcellularLocation>
        <location evidence="12">Host lipid droplet</location>
    </subcellularLocation>
    <text evidence="2 5">Host membrane insertion occurs after processing by the NS3 protease (By similarity). Localizes at the surface of lipid droplets (By similarity).</text>
</comment>
<comment type="subcellular location">
    <molecule>RNA-directed RNA polymerase</molecule>
    <subcellularLocation>
        <location evidence="5">Host cytoplasm</location>
    </subcellularLocation>
    <subcellularLocation>
        <location>Host endoplasmic reticulum membrane</location>
        <topology evidence="5">Single-pass type IV membrane protein</topology>
    </subcellularLocation>
    <text evidence="5">Host membrane insertion occurs after processing by the NS3 protease.</text>
</comment>
<comment type="domain">
    <molecule>Envelope glycoprotein E1</molecule>
    <text evidence="5">The transmembrane regions of envelope E1 and E2 glycoproteins are involved in heterodimer formation, ER localization, and assembly of these proteins.</text>
</comment>
<comment type="domain">
    <molecule>Envelope glycoprotein E2</molecule>
    <text evidence="3 5">The transmembrane regions of envelope E1 and E2 glycoproteins are involved in heterodimer formation, ER localization, and assembly of these proteins (By similarity). Envelope E2 glycoprotein contain two highly variable regions called hypervariable region 1 and 2 (HVR1 and HVR2) (By similarity). E2 also contain two segments involved in CD81-binding (By similarity). HVR1 is implicated in the SCARB1-mediated cell entry and probably acts as a regulator of the association of particles with lipids (By similarity).</text>
</comment>
<comment type="domain">
    <molecule>Protease NS2</molecule>
    <text evidence="3">The N-terminus of NS3 is required for the catalytic activity of protease NS2 (By similarity). The minimal catalytic region includes the C-terminus of NS2 and the N-terminus NS3 protease domain (active region NS2-3) (By similarity).</text>
</comment>
<comment type="domain">
    <molecule>Serine protease/helicase NS3</molecule>
    <text evidence="2 5">The N-terminal one-third contains the protease activity (By similarity). This region contains a zinc atom that does not belong to the active site, but may play a structural rather than a catalytic role (By similarity). This region is essential for the activity of protease NS2, maybe by contributing to the folding of the latter (By similarity). The NTPase/helicase activity is located in the twothirds C-terminus of NS3, this domain contains the NTPase and RNA-binding regions (By similarity).</text>
</comment>
<comment type="domain">
    <molecule>Non-structural protein 4B</molecule>
    <text evidence="11">Contains a glycine zipper region that critically contributes to the biogenesis of functional ER-derived replication organelles.</text>
</comment>
<comment type="domain">
    <molecule>Non-structural protein 5A</molecule>
    <text evidence="2 5">The N-terminus of NS5A acts as membrane anchor (By similarity). The central part of NS5A contains a variable region called interferon sensitivity determining region (ISDR) and seems to be intrinsically disordered and interacts with NS5B and host EIF2AK2 (By similarity). The C-terminus of NS5A contains a variable region called variable region 3 (V3) (By similarity). ISDR and V3 may be involved in sensitivity and/or resistance to IFN-alpha therapy (By similarity). The C-terminus contains a nuclear localization signal (By similarity). The SH3-binding domain is involved in the interaction with host BIN1, GRB2 and Src-family kinases (By similarity).</text>
</comment>
<comment type="PTM">
    <molecule>Genome polyprotein</molecule>
    <text evidence="4 5">Specific enzymatic cleavages in vivo yield mature proteins (By similarity). The structural proteins, core, E1, E2 and p7 are produced by proteolytic processing by host signal peptidases (By similarity). The core protein precursor is synthesized as a 23 kDa, which is retained in the ER membrane through the hydrophobic signal peptide (By similarity). Cleavage by the signal peptidase releases the 21 kDa mature core protein (By similarity). The cleavage of the core protein precursor occurs between aminoacids 176 and 188 but the exact cleavage site is not known (By similarity). Some degraded forms of the core protein appear as well during the course of infection (By similarity). The other proteins (p7, NS2, NS3, NS4A, NS4B, NS5A and NS5B) are cleaved by the viral proteases (By similarity). Autoprocessing between NS2 and NS3 is mediated by the NS2 cysteine protease catalytic domain and regulated by the NS3 N-terminal domain (By similarity).</text>
</comment>
<comment type="PTM">
    <molecule>Mature core protein</molecule>
    <text evidence="7">Phosphorylated by host PKC and PKA.</text>
</comment>
<comment type="PTM">
    <molecule>Mature core protein</molecule>
    <text evidence="8">Ubiquitinated; mediated by UBE3A and leading to core protein subsequent proteasomal degradation.</text>
</comment>
<comment type="PTM">
    <molecule>Envelope glycoprotein E1</molecule>
    <text evidence="5">Highly N-glycosylated.</text>
</comment>
<comment type="PTM">
    <molecule>Envelope glycoprotein E2</molecule>
    <text evidence="5">Highly N-glycosylated.</text>
</comment>
<comment type="PTM">
    <molecule>Protease NS2</molecule>
    <text evidence="5">Palmitoylation is required for NS2/3 autoprocessing and E2 recruitment to membranes.</text>
</comment>
<comment type="PTM">
    <molecule>Non-structural protein 4B</molecule>
    <text evidence="5">Palmitoylated. This modification may play a role in its polymerization or in protein-protein interactions.</text>
</comment>
<comment type="PTM">
    <molecule>Non-structural protein 5A</molecule>
    <text evidence="2 4">Phosphorylated on serines in a basal form termed p56 (By similarity). p58 is a hyperphosphorylated form of p56 (By similarity). p56 and p58 coexist in the cell in roughly equivalent amounts (By similarity). Hyperphosphorylation is dependent on the presence of NS4A (By similarity). Host CSNK1A1/CKI-alpha or RPS6KB1 kinases may be responsible for NS5A phosphorylation (By similarity).</text>
</comment>
<comment type="PTM">
    <molecule>Non-structural protein 5A</molecule>
    <text evidence="11">Tyrosine phosphorylation is essential for the interaction with host SRC.</text>
</comment>
<comment type="PTM">
    <molecule>RNA-directed RNA polymerase</molecule>
    <text evidence="2">The N-terminus is phosphorylated by host PRK2/PKN2.</text>
</comment>
<comment type="miscellaneous">
    <text evidence="20">Viral particle assembly takes place at the surface of ER-derived membranes in close proximity to lipid droplets. NS2 associates with E1/E2 glycoproteins, NS3 and NS5A, which interacts with the viral RNA and core protein to promote genome encapsidation. The nucleocapsid buds at the ER membrane where E1/E2 glycoproteins are anchored and afterward associate with nascent lipid droplet to acquire APOE and APOC. Secretion of viral particles is probably regulated by viroporin p7.</text>
</comment>
<comment type="miscellaneous">
    <molecule>Non-structural protein 5A</molecule>
    <text evidence="20">Cell culture adaptation of the virus leads to mutations in NS5A, reducing its inhibitory effect on replication.</text>
</comment>
<comment type="miscellaneous">
    <molecule>Mature core protein</molecule>
    <text evidence="2">Exerts viral interference on hepatitis B virus when HCV and HBV coinfect the same cell, by suppressing HBV gene expression, RNA encapsidation and budding.</text>
</comment>
<comment type="similarity">
    <text evidence="20">Belongs to the hepacivirus polyprotein family.</text>
</comment>
<comment type="caution">
    <text evidence="20">The core gene probably also codes for alternative reading frame proteins (ARFPs). Many functions depicted for the core protein might belong to the ARFPs.</text>
</comment>
<proteinExistence type="evidence at protein level"/>
<reference key="1">
    <citation type="journal article" date="1997" name="Biochem. Biophys. Res. Commun.">
        <title>The complete coding sequence of hepatitis C virus genotype 5a, the predominant genotype in South Africa.</title>
        <authorList>
            <person name="Chamberlain R.W."/>
            <person name="Adams N.J."/>
            <person name="Taylor L.A."/>
            <person name="Simmonds P."/>
            <person name="Elliot R.M."/>
        </authorList>
    </citation>
    <scope>NUCLEOTIDE SEQUENCE [GENOMIC RNA]</scope>
</reference>
<reference key="2">
    <citation type="journal article" date="2000" name="J. Viral Hepat.">
        <title>Properties of the hepatitis C virus core protein: a structural protein that modulates cellular processes.</title>
        <authorList>
            <person name="McLauchlan J."/>
        </authorList>
    </citation>
    <scope>REVIEW</scope>
</reference>
<reference key="3">
    <citation type="journal article" date="2004" name="Hepatology">
        <title>Structural biology of hepatitis C virus.</title>
        <authorList>
            <person name="Penin F."/>
            <person name="Dubuisson J."/>
            <person name="Rey F.A."/>
            <person name="Moradpour D."/>
            <person name="Pawlotsky J.-M."/>
        </authorList>
    </citation>
    <scope>REVIEW</scope>
</reference>
<sequence>MSTNPKPQRKTKRNTNRRPQDVKFPGGGQIVGGVYLLPRRGPKLGVRATRKNSERSQPRGRRQPIPKARRPTGRSWGQPGYPWPLYANEGLGWAGWLLSPRSSRPNWGPNDPRRKSPNLGRVIHTLTCGFPHLMGYIPLVGGPVGGVSRALAHGVKVLEDGINYATGNLPGCPFSIFVLALLWCLTVPASAVPYRNASGVYHVTNDCPNSSIVYEADNLILHAPGCVPCVLEDNVSRCWVQITPTLSAPSFGAVTALLRRAVDYLAGGAAFCSALYVGDACGALSLVGQMFTYKPRQHTTVQDCNCSIYSGHITGHRMAWDMMMKWSPTTALLMAQLLRIPQVVIDIIAGGHWGVLLAAAYFASTANWAKVILVLFLFAGVDGRTHTVGGTVGQGLKSLTSFFNPGPQRQLQFVNTNGSWHINSTALNCNDSLQTGFIAGLMYAHKFNSSGCPERMSSCRPLAAFDQGWGTISYATISGPSDDKPYCWHYPPRPCGVVPARDVCGPVYCFTPSPVVVGTTDRRGCPTYNWGSNETDILLLNNIRPPAGNWFGCTWMNSTGFVKNCGAPPCNLGPTGNNSLKCPTDCFRKHPDATYTRCGSGPWLTPRCLVHYPYRLWHYPCTVNYTIFKVRMFIGGLEHRLEAACNWTYGERCDLEDRDRAELSPLLHTTTQWAILPCSFTPTPALSTGLIHLHQNIVDTQYLYGLSSSIVSWAVKWEYIMLVFLLLADARICTCLLILLLICQAEATCKNVIVLNAAAAAGNHGFFWGLLVVCLAWHVKGRLVPGATYLCLGVWPLLLVRLLRPHRALALDSSDGGTVGCLVLIVLTIFTLTPGYKKKVVLVMWWLQYFIARVEAIIHVWVPPLQVKGGRDAVIMLTCLFHPALGFEITKILFGILGPLYLLQHSLTKVPYFLRARALLRLCLLAKHLVYGKYVQAALLHLGRLTGTYIYDHLAPMKDWAASGLRELTVATEPIVFSAMETKVITWGADTAACGNILAVLPVSARRGREIFLGPADDIKTSGWRLLAPITAYAQQTRGVLGAIVLSLTGRDKNEAEGEVQFLSTATQTFLGICINGVMWTLFHGAGSKTLAGPKGPVVQMYTNVDKDLVGWPSPPGKGSLTRCTCGSADLYLVTRHADVIPARRRGDTRASLLSPRPISYLKGSSGGPIMCPSGHVVGVFRAAVCTRGVAKALEFVPVENLETTMRSPVFTDNSTPPAVPHEFQVGHLHAPTGSGKSTKVPAAYAAQGYKVLVLNPSVAATFGFGAYMSRAYGVDPNIRTGVRTVTTGAGITYSTYGKFFADGGCSGGAYDVIICDECHSQDATTILGIGTVLDQAETAGARLVVLATAIPPGSVTTPHPNIEEVALPSEGEIPFYGRAIPLVLIKGGRHLIFCHSKKKCDELAKQLTSLGVNAVAYYRGLDVAVIPATGDVVVCSTDALMTGFTGDFDSVIDCNSAVTQTVDFSLDPTFTIETTTVPQDAVSRSQRRGRTGRGRHGIYRYVSSGERPSGIFDSVVLCECYDAGCAWYDLTPAETTVRLRAYLNTPGLPVCQEHLEFWEGVFTGLTNIDAHMLSQAKQGGENFPYLVAYQATVCVRAKAPPPSWDTMWKCMICLKPTLTGPTPLLYRLGAVQNEITLTHPITKYIMACMSADLEVITSTWVLVGGVVAALAAYCLTVGSVAIVGRIILSGRPAITPDREVLYQQFDEMEECSASLPYVDEARAIAGQFKEKVLGLIGTAGQKAETLKPAATSMWSKAEQFWAKHMWNFVSGIQYLAGLSTLPGNPAVATLMSFTAAVTSPLTTHQTLLFNILGGWVASQIAPPTAATAFVVSGMAGAAVGNIGLGRVLIDILAGYGTGVAGALVAFKIMCGERPTAEELVNLLPSILCPGALVVGVICAAVLRRHIGPGEGAVQWMNRLIAFASRGNHGSPTHYVPETDASAKVTQLLSSLTVTSLLKRLHTWIGEDYSTPCDGTWLRAIWDWVCTALTDFKAWLQAKLLPQLPGVPFFSCQKGYKGVWRGDGVNSTKCPCGATISGHVKNGTMRIVGPKLCSNTWQGTFPINATTTGPSVPAPAPNYKFALWRVGAADYAEVRRVGDYHYITGVTQDNLKCPCQVPSPEFFTELDGVRIHRFAPPCNPLLREEVTFSVGLHSYVVGSQLPCEPEPDVTVLTSMLSDPAHITAETAKRRLNRGSPPSLANSSASQLSAPSLKATCTIQGHHPDADLIKANLLWRQCMGGNITRVEAENKVEILDCFKPLKEEEDDREISVSADCFKKGPAFPPALPVWARPGYDPPLLETWKRPDYDPPQVWGCPIPPAGPPPVPLPRRKRKPMELSDSTVSQVMADLADARFKVDTPSIEGQDSALGTSSQHDSGPEEKRDDNSDAASYSSMPPLEGEPGDPDLSSGSWSTVSGEDNVVCCSMSYTWTGALITPCSAEEEKLPINPLSNTLLRHHNLVYSTSSRSAGLRQKKVTFDRLQVLDDHYREVVDEMKRLASKVKARLLPLEEACGLTPPHSARSKYGYGAKEVRSLDKKALKHIEGVWQDLLDDSDTPLPTTIMAKNEVFAVEPSKGGKKPARLIVYPDLGVRVCEKRALYDVAQKLPTALMGPSYGFQYSPAQRVDFLLKAWKSKKIPMAFSYDTRCFDSTITEHDIMTEESIYQSCDLQPEARVAIRSLTQRLYCGGPMYNSKGQQCGYRRCRASGVFTTSMGNTMTCYIKALASCRAAKLRDCTLLVCGDDLVAICESQGTHEDEASLRAFTEAMTRYSAPPGDPPVPAYDLELVTSCSSNVSVARDASGNRIYYLTRDPQVPLAKAAWETAKHSPVNSWLGNIIMYAPTLWARIVLMTHFFSVLQSQEQLEKTLAFEMYGSVYSVTPLDLPAIIQRLHGLSAFSLHSYSPSEINRVASCLRKLGVPPLRAWRHRARAVRAKLIAQGGRAAICGIYLFNWAVKTKRKLTPLADADRLDLSSWFTVGAGGGDIYHSMSRARPRNLLLCLLLLSVGVGIFLLPAR</sequence>
<organism>
    <name type="scientific">Hepatitis C virus genotype 5a (isolate EUH1480)</name>
    <name type="common">HCV</name>
    <dbReference type="NCBI Taxonomy" id="356419"/>
    <lineage>
        <taxon>Viruses</taxon>
        <taxon>Riboviria</taxon>
        <taxon>Orthornavirae</taxon>
        <taxon>Kitrinoviricota</taxon>
        <taxon>Flasuviricetes</taxon>
        <taxon>Amarillovirales</taxon>
        <taxon>Flaviviridae</taxon>
        <taxon>Hepacivirus</taxon>
        <taxon>Hepacivirus hominis</taxon>
    </lineage>
</organism>
<keyword id="KW-0002">3D-structure</keyword>
<keyword id="KW-0007">Acetylation</keyword>
<keyword id="KW-1072">Activation of host autophagy by virus</keyword>
<keyword id="KW-0053">Apoptosis</keyword>
<keyword id="KW-0067">ATP-binding</keyword>
<keyword id="KW-0167">Capsid protein</keyword>
<keyword id="KW-1165">Clathrin-mediated endocytosis of virus by host</keyword>
<keyword id="KW-1015">Disulfide bond</keyword>
<keyword id="KW-1170">Fusion of virus membrane with host endosomal membrane</keyword>
<keyword id="KW-1168">Fusion of virus membrane with host membrane</keyword>
<keyword id="KW-1078">G1/S host cell cycle checkpoint dysregulation by virus</keyword>
<keyword id="KW-0325">Glycoprotein</keyword>
<keyword id="KW-0347">Helicase</keyword>
<keyword id="KW-1032">Host cell membrane</keyword>
<keyword id="KW-1035">Host cytoplasm</keyword>
<keyword id="KW-1038">Host endoplasmic reticulum</keyword>
<keyword id="KW-1041">Host lipid droplet</keyword>
<keyword id="KW-1043">Host membrane</keyword>
<keyword id="KW-1045">Host mitochondrion</keyword>
<keyword id="KW-1048">Host nucleus</keyword>
<keyword id="KW-0945">Host-virus interaction</keyword>
<keyword id="KW-0378">Hydrolase</keyword>
<keyword id="KW-1090">Inhibition of host innate immune response by virus</keyword>
<keyword id="KW-1114">Inhibition of host interferon signaling pathway by virus</keyword>
<keyword id="KW-1097">Inhibition of host MAVS by virus</keyword>
<keyword id="KW-1113">Inhibition of host RLR pathway by virus</keyword>
<keyword id="KW-1105">Inhibition of host STAT1 by virus</keyword>
<keyword id="KW-1110">Inhibition of host TRAFs by virus</keyword>
<keyword id="KW-0922">Interferon antiviral system evasion</keyword>
<keyword id="KW-0407">Ion channel</keyword>
<keyword id="KW-0406">Ion transport</keyword>
<keyword id="KW-1017">Isopeptide bond</keyword>
<keyword id="KW-0449">Lipoprotein</keyword>
<keyword id="KW-0460">Magnesium</keyword>
<keyword id="KW-0472">Membrane</keyword>
<keyword id="KW-0479">Metal-binding</keyword>
<keyword id="KW-1121">Modulation of host cell cycle by virus</keyword>
<keyword id="KW-0511">Multifunctional enzyme</keyword>
<keyword id="KW-0547">Nucleotide-binding</keyword>
<keyword id="KW-0548">Nucleotidyltransferase</keyword>
<keyword id="KW-0553">Oncogene</keyword>
<keyword id="KW-0564">Palmitate</keyword>
<keyword id="KW-0597">Phosphoprotein</keyword>
<keyword id="KW-0645">Protease</keyword>
<keyword id="KW-0687">Ribonucleoprotein</keyword>
<keyword id="KW-0694">RNA-binding</keyword>
<keyword id="KW-0696">RNA-directed RNA polymerase</keyword>
<keyword id="KW-0720">Serine protease</keyword>
<keyword id="KW-0729">SH3-binding</keyword>
<keyword id="KW-0788">Thiol protease</keyword>
<keyword id="KW-0804">Transcription</keyword>
<keyword id="KW-0805">Transcription regulation</keyword>
<keyword id="KW-0808">Transferase</keyword>
<keyword id="KW-0812">Transmembrane</keyword>
<keyword id="KW-1133">Transmembrane helix</keyword>
<keyword id="KW-0813">Transport</keyword>
<keyword id="KW-0832">Ubl conjugation</keyword>
<keyword id="KW-1161">Viral attachment to host cell</keyword>
<keyword id="KW-0261">Viral envelope protein</keyword>
<keyword id="KW-0899">Viral immunoevasion</keyword>
<keyword id="KW-1182">Viral ion channel</keyword>
<keyword id="KW-0543">Viral nucleoprotein</keyword>
<keyword id="KW-1162">Viral penetration into host cytoplasm</keyword>
<keyword id="KW-0693">Viral RNA replication</keyword>
<keyword id="KW-0946">Virion</keyword>
<keyword id="KW-1164">Virus endocytosis by host</keyword>
<keyword id="KW-1160">Virus entry into host cell</keyword>
<keyword id="KW-0862">Zinc</keyword>
<dbReference type="EC" id="3.4.22.-" evidence="3"/>
<dbReference type="EC" id="3.4.21.98" evidence="5"/>
<dbReference type="EC" id="3.6.1.15" evidence="5"/>
<dbReference type="EC" id="3.6.4.13" evidence="5"/>
<dbReference type="EC" id="2.7.7.48" evidence="5"/>
<dbReference type="EMBL" id="Y13184">
    <property type="protein sequence ID" value="CAA73640.1"/>
    <property type="molecule type" value="Genomic_RNA"/>
</dbReference>
<dbReference type="PIR" id="JC5620">
    <property type="entry name" value="JC5620"/>
</dbReference>
<dbReference type="RefSeq" id="YP_001469633.1">
    <property type="nucleotide sequence ID" value="NC_009826.1"/>
</dbReference>
<dbReference type="PDB" id="2M6X">
    <property type="method" value="NMR"/>
    <property type="chains" value="A/B/C/D/E/F=748-810"/>
</dbReference>
<dbReference type="PDBsum" id="2M6X"/>
<dbReference type="BMRB" id="O39928"/>
<dbReference type="SMR" id="O39928"/>
<dbReference type="MEROPS" id="C18.001"/>
<dbReference type="MEROPS" id="S29.001"/>
<dbReference type="GeneID" id="11027170"/>
<dbReference type="KEGG" id="vg:11027170"/>
<dbReference type="euHCVdb" id="Y13184"/>
<dbReference type="EvolutionaryTrace" id="O39928"/>
<dbReference type="Proteomes" id="UP000007536">
    <property type="component" value="Genome"/>
</dbReference>
<dbReference type="GO" id="GO:0044167">
    <property type="term" value="C:host cell endoplasmic reticulum membrane"/>
    <property type="evidence" value="ECO:0007669"/>
    <property type="project" value="UniProtKB-SubCell"/>
</dbReference>
<dbReference type="GO" id="GO:0044186">
    <property type="term" value="C:host cell lipid droplet"/>
    <property type="evidence" value="ECO:0007669"/>
    <property type="project" value="UniProtKB-SubCell"/>
</dbReference>
<dbReference type="GO" id="GO:0044191">
    <property type="term" value="C:host cell mitochondrial membrane"/>
    <property type="evidence" value="ECO:0007669"/>
    <property type="project" value="UniProtKB-SubCell"/>
</dbReference>
<dbReference type="GO" id="GO:0042025">
    <property type="term" value="C:host cell nucleus"/>
    <property type="evidence" value="ECO:0007669"/>
    <property type="project" value="UniProtKB-SubCell"/>
</dbReference>
<dbReference type="GO" id="GO:0044220">
    <property type="term" value="C:host cell perinuclear region of cytoplasm"/>
    <property type="evidence" value="ECO:0007669"/>
    <property type="project" value="UniProtKB-SubCell"/>
</dbReference>
<dbReference type="GO" id="GO:0020002">
    <property type="term" value="C:host cell plasma membrane"/>
    <property type="evidence" value="ECO:0007669"/>
    <property type="project" value="UniProtKB-SubCell"/>
</dbReference>
<dbReference type="GO" id="GO:0016020">
    <property type="term" value="C:membrane"/>
    <property type="evidence" value="ECO:0007669"/>
    <property type="project" value="UniProtKB-KW"/>
</dbReference>
<dbReference type="GO" id="GO:1990904">
    <property type="term" value="C:ribonucleoprotein complex"/>
    <property type="evidence" value="ECO:0007669"/>
    <property type="project" value="UniProtKB-KW"/>
</dbReference>
<dbReference type="GO" id="GO:0019031">
    <property type="term" value="C:viral envelope"/>
    <property type="evidence" value="ECO:0007669"/>
    <property type="project" value="UniProtKB-KW"/>
</dbReference>
<dbReference type="GO" id="GO:0019013">
    <property type="term" value="C:viral nucleocapsid"/>
    <property type="evidence" value="ECO:0007669"/>
    <property type="project" value="UniProtKB-KW"/>
</dbReference>
<dbReference type="GO" id="GO:0055036">
    <property type="term" value="C:virion membrane"/>
    <property type="evidence" value="ECO:0007669"/>
    <property type="project" value="UniProtKB-SubCell"/>
</dbReference>
<dbReference type="GO" id="GO:0005524">
    <property type="term" value="F:ATP binding"/>
    <property type="evidence" value="ECO:0007669"/>
    <property type="project" value="UniProtKB-KW"/>
</dbReference>
<dbReference type="GO" id="GO:0016887">
    <property type="term" value="F:ATP hydrolysis activity"/>
    <property type="evidence" value="ECO:0007669"/>
    <property type="project" value="RHEA"/>
</dbReference>
<dbReference type="GO" id="GO:0015267">
    <property type="term" value="F:channel activity"/>
    <property type="evidence" value="ECO:0007669"/>
    <property type="project" value="UniProtKB-KW"/>
</dbReference>
<dbReference type="GO" id="GO:0004197">
    <property type="term" value="F:cysteine-type endopeptidase activity"/>
    <property type="evidence" value="ECO:0007669"/>
    <property type="project" value="InterPro"/>
</dbReference>
<dbReference type="GO" id="GO:0003723">
    <property type="term" value="F:RNA binding"/>
    <property type="evidence" value="ECO:0007669"/>
    <property type="project" value="UniProtKB-KW"/>
</dbReference>
<dbReference type="GO" id="GO:0003724">
    <property type="term" value="F:RNA helicase activity"/>
    <property type="evidence" value="ECO:0007669"/>
    <property type="project" value="UniProtKB-EC"/>
</dbReference>
<dbReference type="GO" id="GO:0003968">
    <property type="term" value="F:RNA-directed RNA polymerase activity"/>
    <property type="evidence" value="ECO:0007669"/>
    <property type="project" value="UniProtKB-KW"/>
</dbReference>
<dbReference type="GO" id="GO:0004252">
    <property type="term" value="F:serine-type endopeptidase activity"/>
    <property type="evidence" value="ECO:0007669"/>
    <property type="project" value="InterPro"/>
</dbReference>
<dbReference type="GO" id="GO:0017124">
    <property type="term" value="F:SH3 domain binding"/>
    <property type="evidence" value="ECO:0007669"/>
    <property type="project" value="UniProtKB-KW"/>
</dbReference>
<dbReference type="GO" id="GO:0005198">
    <property type="term" value="F:structural molecule activity"/>
    <property type="evidence" value="ECO:0007669"/>
    <property type="project" value="InterPro"/>
</dbReference>
<dbReference type="GO" id="GO:0008270">
    <property type="term" value="F:zinc ion binding"/>
    <property type="evidence" value="ECO:0007669"/>
    <property type="project" value="InterPro"/>
</dbReference>
<dbReference type="GO" id="GO:0075512">
    <property type="term" value="P:clathrin-dependent endocytosis of virus by host cell"/>
    <property type="evidence" value="ECO:0007669"/>
    <property type="project" value="UniProtKB-KW"/>
</dbReference>
<dbReference type="GO" id="GO:0039654">
    <property type="term" value="P:fusion of virus membrane with host endosome membrane"/>
    <property type="evidence" value="ECO:0007669"/>
    <property type="project" value="UniProtKB-KW"/>
</dbReference>
<dbReference type="GO" id="GO:0034220">
    <property type="term" value="P:monoatomic ion transmembrane transport"/>
    <property type="evidence" value="ECO:0007669"/>
    <property type="project" value="UniProtKB-KW"/>
</dbReference>
<dbReference type="GO" id="GO:0006508">
    <property type="term" value="P:proteolysis"/>
    <property type="evidence" value="ECO:0007669"/>
    <property type="project" value="UniProtKB-KW"/>
</dbReference>
<dbReference type="GO" id="GO:0039520">
    <property type="term" value="P:symbiont-mediated activation of host autophagy"/>
    <property type="evidence" value="ECO:0007669"/>
    <property type="project" value="UniProtKB-KW"/>
</dbReference>
<dbReference type="GO" id="GO:0039645">
    <property type="term" value="P:symbiont-mediated perturbation of host cell cycle G1/S transition checkpoint"/>
    <property type="evidence" value="ECO:0007669"/>
    <property type="project" value="UniProtKB-KW"/>
</dbReference>
<dbReference type="GO" id="GO:0039545">
    <property type="term" value="P:symbiont-mediated suppression of host cytoplasmic pattern recognition receptor signaling pathway via inhibition of MAVS activity"/>
    <property type="evidence" value="ECO:0007669"/>
    <property type="project" value="UniProtKB-KW"/>
</dbReference>
<dbReference type="GO" id="GO:0039563">
    <property type="term" value="P:symbiont-mediated suppression of host JAK-STAT cascade via inhibition of STAT1 activity"/>
    <property type="evidence" value="ECO:0007669"/>
    <property type="project" value="UniProtKB-KW"/>
</dbReference>
<dbReference type="GO" id="GO:0039527">
    <property type="term" value="P:symbiont-mediated suppression of host TRAF-mediated signal transduction"/>
    <property type="evidence" value="ECO:0007669"/>
    <property type="project" value="UniProtKB-KW"/>
</dbReference>
<dbReference type="GO" id="GO:0039502">
    <property type="term" value="P:symbiont-mediated suppression of host type I interferon-mediated signaling pathway"/>
    <property type="evidence" value="ECO:0007669"/>
    <property type="project" value="UniProtKB-KW"/>
</dbReference>
<dbReference type="GO" id="GO:0019087">
    <property type="term" value="P:symbiont-mediated transformation of host cell"/>
    <property type="evidence" value="ECO:0007669"/>
    <property type="project" value="InterPro"/>
</dbReference>
<dbReference type="GO" id="GO:0039694">
    <property type="term" value="P:viral RNA genome replication"/>
    <property type="evidence" value="ECO:0007669"/>
    <property type="project" value="InterPro"/>
</dbReference>
<dbReference type="GO" id="GO:0019062">
    <property type="term" value="P:virion attachment to host cell"/>
    <property type="evidence" value="ECO:0007669"/>
    <property type="project" value="UniProtKB-KW"/>
</dbReference>
<dbReference type="CDD" id="cd20903">
    <property type="entry name" value="HCV_p7"/>
    <property type="match status" value="1"/>
</dbReference>
<dbReference type="CDD" id="cd23202">
    <property type="entry name" value="Hepacivirus_RdRp"/>
    <property type="match status" value="1"/>
</dbReference>
<dbReference type="FunFam" id="2.20.25.220:FF:000001">
    <property type="entry name" value="Genome polyprotein"/>
    <property type="match status" value="1"/>
</dbReference>
<dbReference type="FunFam" id="2.40.10.10:FF:000029">
    <property type="entry name" value="Genome polyprotein"/>
    <property type="match status" value="1"/>
</dbReference>
<dbReference type="FunFam" id="3.30.160.890:FF:000001">
    <property type="entry name" value="Genome polyprotein"/>
    <property type="match status" value="1"/>
</dbReference>
<dbReference type="FunFam" id="3.30.70.270:FF:000015">
    <property type="entry name" value="Genome polyprotein"/>
    <property type="match status" value="1"/>
</dbReference>
<dbReference type="FunFam" id="3.40.50.300:FF:000557">
    <property type="entry name" value="Genome polyprotein"/>
    <property type="match status" value="1"/>
</dbReference>
<dbReference type="FunFam" id="3.40.50.300:FF:000717">
    <property type="entry name" value="Genome polyprotein"/>
    <property type="match status" value="1"/>
</dbReference>
<dbReference type="FunFam" id="4.10.710.10:FF:000001">
    <property type="entry name" value="Genome polyprotein"/>
    <property type="match status" value="1"/>
</dbReference>
<dbReference type="Gene3D" id="2.40.10.120">
    <property type="match status" value="1"/>
</dbReference>
<dbReference type="Gene3D" id="3.30.70.270">
    <property type="match status" value="2"/>
</dbReference>
<dbReference type="Gene3D" id="6.10.250.1610">
    <property type="match status" value="1"/>
</dbReference>
<dbReference type="Gene3D" id="6.10.250.1750">
    <property type="match status" value="1"/>
</dbReference>
<dbReference type="Gene3D" id="6.10.250.2920">
    <property type="match status" value="1"/>
</dbReference>
<dbReference type="Gene3D" id="2.20.25.210">
    <property type="entry name" value="Hepatitis C NS5A, domain 1B"/>
    <property type="match status" value="1"/>
</dbReference>
<dbReference type="Gene3D" id="4.10.710.10">
    <property type="entry name" value="Hepatitis C Virus Capsid Protein, Chain A"/>
    <property type="match status" value="1"/>
</dbReference>
<dbReference type="Gene3D" id="3.30.160.890">
    <property type="entry name" value="Hepatitis C virus envelope glycoprotein E1, chain C"/>
    <property type="match status" value="1"/>
</dbReference>
<dbReference type="Gene3D" id="2.30.30.710">
    <property type="entry name" value="Hepatitis C virus non-structural protein NS2, C-terminal domain"/>
    <property type="match status" value="1"/>
</dbReference>
<dbReference type="Gene3D" id="1.20.1280.150">
    <property type="entry name" value="Hepatitis C virus non-structural protein NS2, N-terminal domain"/>
    <property type="match status" value="1"/>
</dbReference>
<dbReference type="Gene3D" id="2.20.25.220">
    <property type="entry name" value="Hepatitis C virus NS5A, 1B domain"/>
    <property type="match status" value="1"/>
</dbReference>
<dbReference type="Gene3D" id="3.40.50.300">
    <property type="entry name" value="P-loop containing nucleotide triphosphate hydrolases"/>
    <property type="match status" value="2"/>
</dbReference>
<dbReference type="Gene3D" id="1.10.820.10">
    <property type="entry name" value="RNA Helicase Chain A , domain 3"/>
    <property type="match status" value="1"/>
</dbReference>
<dbReference type="Gene3D" id="2.40.10.10">
    <property type="entry name" value="Trypsin-like serine proteases"/>
    <property type="match status" value="1"/>
</dbReference>
<dbReference type="InterPro" id="IPR043502">
    <property type="entry name" value="DNA/RNA_pol_sf"/>
</dbReference>
<dbReference type="InterPro" id="IPR002521">
    <property type="entry name" value="HCV_Core_C"/>
</dbReference>
<dbReference type="InterPro" id="IPR044896">
    <property type="entry name" value="HCV_core_chain_A"/>
</dbReference>
<dbReference type="InterPro" id="IPR002522">
    <property type="entry name" value="HCV_core_N"/>
</dbReference>
<dbReference type="InterPro" id="IPR002519">
    <property type="entry name" value="HCV_Env"/>
</dbReference>
<dbReference type="InterPro" id="IPR002531">
    <property type="entry name" value="HCV_NS1"/>
</dbReference>
<dbReference type="InterPro" id="IPR002518">
    <property type="entry name" value="HCV_NS2"/>
</dbReference>
<dbReference type="InterPro" id="IPR042205">
    <property type="entry name" value="HCV_NS2_C"/>
</dbReference>
<dbReference type="InterPro" id="IPR042209">
    <property type="entry name" value="HCV_NS2_N"/>
</dbReference>
<dbReference type="InterPro" id="IPR000745">
    <property type="entry name" value="HCV_NS4a"/>
</dbReference>
<dbReference type="InterPro" id="IPR001490">
    <property type="entry name" value="HCV_NS4b"/>
</dbReference>
<dbReference type="InterPro" id="IPR002868">
    <property type="entry name" value="HCV_NS5a"/>
</dbReference>
<dbReference type="InterPro" id="IPR013192">
    <property type="entry name" value="HCV_NS5A_1a"/>
</dbReference>
<dbReference type="InterPro" id="IPR013193">
    <property type="entry name" value="HCV_NS5a_1B_dom"/>
</dbReference>
<dbReference type="InterPro" id="IPR038568">
    <property type="entry name" value="HCV_NS5A_1B_sf"/>
</dbReference>
<dbReference type="InterPro" id="IPR024350">
    <property type="entry name" value="HCV_NS5a_C"/>
</dbReference>
<dbReference type="InterPro" id="IPR049913">
    <property type="entry name" value="HCV_p7"/>
</dbReference>
<dbReference type="InterPro" id="IPR014001">
    <property type="entry name" value="Helicase_ATP-bd"/>
</dbReference>
<dbReference type="InterPro" id="IPR001650">
    <property type="entry name" value="Helicase_C-like"/>
</dbReference>
<dbReference type="InterPro" id="IPR004109">
    <property type="entry name" value="HepC_NS3_protease"/>
</dbReference>
<dbReference type="InterPro" id="IPR054175">
    <property type="entry name" value="NS3_helicase_C"/>
</dbReference>
<dbReference type="InterPro" id="IPR038170">
    <property type="entry name" value="NS5A_1a_sf"/>
</dbReference>
<dbReference type="InterPro" id="IPR027417">
    <property type="entry name" value="P-loop_NTPase"/>
</dbReference>
<dbReference type="InterPro" id="IPR009003">
    <property type="entry name" value="Peptidase_S1_PA"/>
</dbReference>
<dbReference type="InterPro" id="IPR043504">
    <property type="entry name" value="Peptidase_S1_PA_chymotrypsin"/>
</dbReference>
<dbReference type="InterPro" id="IPR043128">
    <property type="entry name" value="Rev_trsase/Diguanyl_cyclase"/>
</dbReference>
<dbReference type="InterPro" id="IPR007094">
    <property type="entry name" value="RNA-dir_pol_PSvirus"/>
</dbReference>
<dbReference type="InterPro" id="IPR002166">
    <property type="entry name" value="RNA_pol_HCV"/>
</dbReference>
<dbReference type="Pfam" id="PF01543">
    <property type="entry name" value="HCV_capsid"/>
    <property type="match status" value="1"/>
</dbReference>
<dbReference type="Pfam" id="PF01542">
    <property type="entry name" value="HCV_core"/>
    <property type="match status" value="1"/>
</dbReference>
<dbReference type="Pfam" id="PF01539">
    <property type="entry name" value="HCV_env"/>
    <property type="match status" value="1"/>
</dbReference>
<dbReference type="Pfam" id="PF01560">
    <property type="entry name" value="HCV_NS1"/>
    <property type="match status" value="1"/>
</dbReference>
<dbReference type="Pfam" id="PF01538">
    <property type="entry name" value="HCV_NS2"/>
    <property type="match status" value="1"/>
</dbReference>
<dbReference type="Pfam" id="PF01006">
    <property type="entry name" value="HCV_NS4a"/>
    <property type="match status" value="1"/>
</dbReference>
<dbReference type="Pfam" id="PF01001">
    <property type="entry name" value="HCV_NS4b"/>
    <property type="match status" value="1"/>
</dbReference>
<dbReference type="Pfam" id="PF01506">
    <property type="entry name" value="HCV_NS5a"/>
    <property type="match status" value="1"/>
</dbReference>
<dbReference type="Pfam" id="PF08300">
    <property type="entry name" value="HCV_NS5a_1a"/>
    <property type="match status" value="1"/>
</dbReference>
<dbReference type="Pfam" id="PF08301">
    <property type="entry name" value="HCV_NS5a_1b"/>
    <property type="match status" value="1"/>
</dbReference>
<dbReference type="Pfam" id="PF12941">
    <property type="entry name" value="HCV_NS5a_C"/>
    <property type="match status" value="1"/>
</dbReference>
<dbReference type="Pfam" id="PF22027">
    <property type="entry name" value="NS3_helicase_C"/>
    <property type="match status" value="1"/>
</dbReference>
<dbReference type="Pfam" id="PF02907">
    <property type="entry name" value="Peptidase_S29"/>
    <property type="match status" value="1"/>
</dbReference>
<dbReference type="Pfam" id="PF00998">
    <property type="entry name" value="RdRP_3"/>
    <property type="match status" value="1"/>
</dbReference>
<dbReference type="SMART" id="SM00487">
    <property type="entry name" value="DEXDc"/>
    <property type="match status" value="1"/>
</dbReference>
<dbReference type="SUPFAM" id="SSF56672">
    <property type="entry name" value="DNA/RNA polymerases"/>
    <property type="match status" value="1"/>
</dbReference>
<dbReference type="SUPFAM" id="SSF52540">
    <property type="entry name" value="P-loop containing nucleoside triphosphate hydrolases"/>
    <property type="match status" value="2"/>
</dbReference>
<dbReference type="SUPFAM" id="SSF50494">
    <property type="entry name" value="Trypsin-like serine proteases"/>
    <property type="match status" value="1"/>
</dbReference>
<dbReference type="PROSITE" id="PS51693">
    <property type="entry name" value="HCV_NS2_PRO"/>
    <property type="match status" value="1"/>
</dbReference>
<dbReference type="PROSITE" id="PS51192">
    <property type="entry name" value="HELICASE_ATP_BIND_1"/>
    <property type="match status" value="1"/>
</dbReference>
<dbReference type="PROSITE" id="PS51194">
    <property type="entry name" value="HELICASE_CTER"/>
    <property type="match status" value="1"/>
</dbReference>
<dbReference type="PROSITE" id="PS51822">
    <property type="entry name" value="HV_PV_NS3_PRO"/>
    <property type="match status" value="1"/>
</dbReference>
<dbReference type="PROSITE" id="PS50507">
    <property type="entry name" value="RDRP_SSRNA_POS"/>
    <property type="match status" value="1"/>
</dbReference>
<organismHost>
    <name type="scientific">Homo sapiens</name>
    <name type="common">Human</name>
    <dbReference type="NCBI Taxonomy" id="9606"/>
</organismHost>
<accession>O39928</accession>
<evidence type="ECO:0000250" key="1">
    <source>
        <dbReference type="UniProtKB" id="O92972"/>
    </source>
</evidence>
<evidence type="ECO:0000250" key="2">
    <source>
        <dbReference type="UniProtKB" id="P26662"/>
    </source>
</evidence>
<evidence type="ECO:0000250" key="3">
    <source>
        <dbReference type="UniProtKB" id="P26663"/>
    </source>
</evidence>
<evidence type="ECO:0000250" key="4">
    <source>
        <dbReference type="UniProtKB" id="P26664"/>
    </source>
</evidence>
<evidence type="ECO:0000250" key="5">
    <source>
        <dbReference type="UniProtKB" id="P27958"/>
    </source>
</evidence>
<evidence type="ECO:0000250" key="6">
    <source>
        <dbReference type="UniProtKB" id="P29846"/>
    </source>
</evidence>
<evidence type="ECO:0000250" key="7">
    <source>
        <dbReference type="UniProtKB" id="Q01403"/>
    </source>
</evidence>
<evidence type="ECO:0000250" key="8">
    <source>
        <dbReference type="UniProtKB" id="Q03463"/>
    </source>
</evidence>
<evidence type="ECO:0000250" key="9">
    <source>
        <dbReference type="UniProtKB" id="Q5EG65"/>
    </source>
</evidence>
<evidence type="ECO:0000250" key="10">
    <source>
        <dbReference type="UniProtKB" id="Q913V3"/>
    </source>
</evidence>
<evidence type="ECO:0000250" key="11">
    <source>
        <dbReference type="UniProtKB" id="Q99IB8"/>
    </source>
</evidence>
<evidence type="ECO:0000250" key="12">
    <source>
        <dbReference type="UniProtKB" id="Q9WMX2"/>
    </source>
</evidence>
<evidence type="ECO:0000255" key="13"/>
<evidence type="ECO:0000255" key="14">
    <source>
        <dbReference type="PROSITE-ProRule" id="PRU00539"/>
    </source>
</evidence>
<evidence type="ECO:0000255" key="15">
    <source>
        <dbReference type="PROSITE-ProRule" id="PRU00541"/>
    </source>
</evidence>
<evidence type="ECO:0000255" key="16">
    <source>
        <dbReference type="PROSITE-ProRule" id="PRU00542"/>
    </source>
</evidence>
<evidence type="ECO:0000255" key="17">
    <source>
        <dbReference type="PROSITE-ProRule" id="PRU01030"/>
    </source>
</evidence>
<evidence type="ECO:0000255" key="18">
    <source>
        <dbReference type="PROSITE-ProRule" id="PRU01166"/>
    </source>
</evidence>
<evidence type="ECO:0000256" key="19">
    <source>
        <dbReference type="SAM" id="MobiDB-lite"/>
    </source>
</evidence>
<evidence type="ECO:0000305" key="20"/>
<evidence type="ECO:0007829" key="21">
    <source>
        <dbReference type="PDB" id="2M6X"/>
    </source>
</evidence>
<protein>
    <recommendedName>
        <fullName>Genome polyprotein</fullName>
    </recommendedName>
    <component>
        <recommendedName>
            <fullName>Core protein precursor</fullName>
        </recommendedName>
        <alternativeName>
            <fullName>Capsid protein C</fullName>
        </alternativeName>
        <alternativeName>
            <fullName>p23</fullName>
        </alternativeName>
    </component>
    <component>
        <recommendedName>
            <fullName>Mature core protein</fullName>
        </recommendedName>
        <alternativeName>
            <fullName>p21</fullName>
        </alternativeName>
    </component>
    <component>
        <recommendedName>
            <fullName>Envelope glycoprotein E1</fullName>
        </recommendedName>
        <alternativeName>
            <fullName>gp32</fullName>
        </alternativeName>
        <alternativeName>
            <fullName>gp35</fullName>
        </alternativeName>
    </component>
    <component>
        <recommendedName>
            <fullName>Envelope glycoprotein E2</fullName>
        </recommendedName>
        <alternativeName>
            <fullName>NS1</fullName>
        </alternativeName>
        <alternativeName>
            <fullName>gp68</fullName>
        </alternativeName>
        <alternativeName>
            <fullName>gp70</fullName>
        </alternativeName>
    </component>
    <component>
        <recommendedName>
            <fullName>Viroporin p7</fullName>
        </recommendedName>
    </component>
    <component>
        <recommendedName>
            <fullName>Protease NS2</fullName>
            <shortName>p23</shortName>
            <ecNumber evidence="3">3.4.22.-</ecNumber>
        </recommendedName>
        <alternativeName>
            <fullName>Non-structural protein 2</fullName>
            <shortName>NS2</shortName>
        </alternativeName>
    </component>
    <component>
        <recommendedName>
            <fullName>Serine protease/helicase NS3</fullName>
            <ecNumber evidence="5">3.4.21.98</ecNumber>
            <ecNumber evidence="5">3.6.1.15</ecNumber>
            <ecNumber evidence="5">3.6.4.13</ecNumber>
        </recommendedName>
        <alternativeName>
            <fullName>Hepacivirin</fullName>
        </alternativeName>
        <alternativeName>
            <fullName evidence="5">NS3 helicase</fullName>
        </alternativeName>
        <alternativeName>
            <fullName evidence="5">NS3 protease</fullName>
        </alternativeName>
        <alternativeName>
            <fullName>NS3P</fullName>
        </alternativeName>
        <alternativeName>
            <fullName>Viroporin p70</fullName>
        </alternativeName>
    </component>
    <component>
        <recommendedName>
            <fullName>Non-structural protein 4A</fullName>
            <shortName>NS4A</shortName>
        </recommendedName>
        <alternativeName>
            <fullName>p8</fullName>
        </alternativeName>
    </component>
    <component>
        <recommendedName>
            <fullName>Non-structural protein 4B</fullName>
            <shortName>NS4B</shortName>
        </recommendedName>
        <alternativeName>
            <fullName>p27</fullName>
        </alternativeName>
    </component>
    <component>
        <recommendedName>
            <fullName>Non-structural protein 5A</fullName>
            <shortName>NS5A</shortName>
        </recommendedName>
        <alternativeName>
            <fullName>p56/58</fullName>
        </alternativeName>
    </component>
    <component>
        <recommendedName>
            <fullName>RNA-directed RNA polymerase</fullName>
            <ecNumber evidence="5">2.7.7.48</ecNumber>
        </recommendedName>
        <alternativeName>
            <fullName>NS5B</fullName>
        </alternativeName>
        <alternativeName>
            <fullName>p68</fullName>
        </alternativeName>
    </component>
</protein>
<feature type="initiator methionine" description="Removed; by host" evidence="4">
    <location>
        <position position="1"/>
    </location>
</feature>
<feature type="chain" id="PRO_0000450902" description="Genome polyprotein">
    <location>
        <begin position="2"/>
        <end position="3014"/>
    </location>
</feature>
<feature type="chain" id="PRO_0000045556" description="Core protein precursor">
    <location>
        <begin position="2"/>
        <end position="191"/>
    </location>
</feature>
<feature type="chain" id="PRO_0000045557" description="Mature core protein">
    <location>
        <begin position="2"/>
        <end position="177"/>
    </location>
</feature>
<feature type="propeptide" id="PRO_0000045558" description="ER anchor for the core protein, removed in mature form by host signal peptidase">
    <location>
        <begin position="178"/>
        <end position="191"/>
    </location>
</feature>
<feature type="chain" id="PRO_0000045559" description="Envelope glycoprotein E1">
    <location>
        <begin position="192"/>
        <end position="383"/>
    </location>
</feature>
<feature type="chain" id="PRO_0000045560" description="Envelope glycoprotein E2">
    <location>
        <begin position="384"/>
        <end position="747"/>
    </location>
</feature>
<feature type="chain" id="PRO_0000045561" description="Viroporin p7">
    <location>
        <begin position="748"/>
        <end position="810"/>
    </location>
</feature>
<feature type="chain" id="PRO_0000045562" description="Protease NS2" evidence="17">
    <location>
        <begin position="811"/>
        <end position="1027"/>
    </location>
</feature>
<feature type="chain" id="PRO_0000045563" description="Serine protease/helicase NS3">
    <location>
        <begin position="1028"/>
        <end position="1658"/>
    </location>
</feature>
<feature type="chain" id="PRO_0000045564" description="Non-structural protein 4A">
    <location>
        <begin position="1659"/>
        <end position="1712"/>
    </location>
</feature>
<feature type="chain" id="PRO_0000045565" description="Non-structural protein 4B">
    <location>
        <begin position="1713"/>
        <end position="1973"/>
    </location>
</feature>
<feature type="chain" id="PRO_0000045566" description="Non-structural protein 5A">
    <location>
        <begin position="1974"/>
        <end position="2423"/>
    </location>
</feature>
<feature type="chain" id="PRO_0000045567" description="RNA-directed RNA polymerase">
    <location>
        <begin position="2424"/>
        <end position="3014"/>
    </location>
</feature>
<feature type="topological domain" description="Cytoplasmic" evidence="13">
    <location>
        <begin position="2"/>
        <end position="168"/>
    </location>
</feature>
<feature type="transmembrane region" description="Helical" evidence="13">
    <location>
        <begin position="169"/>
        <end position="189"/>
    </location>
</feature>
<feature type="topological domain" description="Lumenal" evidence="5">
    <location>
        <begin position="190"/>
        <end position="358"/>
    </location>
</feature>
<feature type="transmembrane region" description="Helical" evidence="5">
    <location>
        <begin position="359"/>
        <end position="379"/>
    </location>
</feature>
<feature type="topological domain" description="Lumenal" evidence="5">
    <location>
        <begin position="380"/>
        <end position="726"/>
    </location>
</feature>
<feature type="transmembrane region" description="Helical" evidence="5">
    <location>
        <begin position="727"/>
        <end position="747"/>
    </location>
</feature>
<feature type="topological domain" description="Lumenal" evidence="5">
    <location>
        <begin position="748"/>
        <end position="758"/>
    </location>
</feature>
<feature type="transmembrane region" description="Helical" evidence="5">
    <location>
        <begin position="759"/>
        <end position="779"/>
    </location>
</feature>
<feature type="topological domain" description="Cytoplasmic" evidence="5">
    <location>
        <begin position="780"/>
        <end position="783"/>
    </location>
</feature>
<feature type="transmembrane region" description="Helical" evidence="5">
    <location>
        <begin position="784"/>
        <end position="804"/>
    </location>
</feature>
<feature type="topological domain" description="Lumenal" evidence="5">
    <location>
        <begin position="805"/>
        <end position="814"/>
    </location>
</feature>
<feature type="transmembrane region" description="Helical" evidence="12">
    <location>
        <begin position="815"/>
        <end position="835"/>
    </location>
</feature>
<feature type="topological domain" description="Cytoplasmic" evidence="12">
    <location>
        <begin position="836"/>
        <end position="882"/>
    </location>
</feature>
<feature type="transmembrane region" description="Helical" evidence="12">
    <location>
        <begin position="883"/>
        <end position="903"/>
    </location>
</feature>
<feature type="topological domain" description="Lumenal" evidence="12">
    <location>
        <begin position="904"/>
        <end position="929"/>
    </location>
</feature>
<feature type="transmembrane region" description="Helical" evidence="12">
    <location>
        <begin position="930"/>
        <end position="950"/>
    </location>
</feature>
<feature type="topological domain" description="Cytoplasmic" evidence="12">
    <location>
        <begin position="951"/>
        <end position="1658"/>
    </location>
</feature>
<feature type="transmembrane region" description="Helical" evidence="13">
    <location>
        <begin position="1659"/>
        <end position="1679"/>
    </location>
</feature>
<feature type="topological domain" description="Cytoplasmic" evidence="13">
    <location>
        <begin position="1680"/>
        <end position="1806"/>
    </location>
</feature>
<feature type="transmembrane region" description="Helical" evidence="13">
    <location>
        <begin position="1807"/>
        <end position="1827"/>
    </location>
</feature>
<feature type="topological domain" description="Lumenal" evidence="5">
    <location>
        <begin position="1828"/>
        <end position="1829"/>
    </location>
</feature>
<feature type="transmembrane region" description="Helical" evidence="13">
    <location>
        <begin position="1830"/>
        <end position="1850"/>
    </location>
</feature>
<feature type="topological domain" description="Cytoplasmic" evidence="13">
    <location>
        <position position="1851"/>
    </location>
</feature>
<feature type="transmembrane region" description="Helical" evidence="13">
    <location>
        <begin position="1852"/>
        <end position="1872"/>
    </location>
</feature>
<feature type="topological domain" description="Lumenal" evidence="13">
    <location>
        <begin position="1873"/>
        <end position="1882"/>
    </location>
</feature>
<feature type="transmembrane region" description="Helical" evidence="13">
    <location>
        <begin position="1883"/>
        <end position="1903"/>
    </location>
</feature>
<feature type="topological domain" description="Cytoplasmic" evidence="13">
    <location>
        <begin position="1904"/>
        <end position="1973"/>
    </location>
</feature>
<feature type="intramembrane region" evidence="5">
    <location>
        <begin position="1974"/>
        <end position="2003"/>
    </location>
</feature>
<feature type="topological domain" description="Cytoplasmic" evidence="5">
    <location>
        <begin position="2004"/>
        <end position="2993"/>
    </location>
</feature>
<feature type="transmembrane region" description="Helical" evidence="5">
    <location>
        <begin position="2994"/>
        <end position="3014"/>
    </location>
</feature>
<feature type="domain" description="Peptidase C18" evidence="17">
    <location>
        <begin position="904"/>
        <end position="1027"/>
    </location>
</feature>
<feature type="domain" description="Peptidase S29" evidence="18">
    <location>
        <begin position="1028"/>
        <end position="1209"/>
    </location>
</feature>
<feature type="domain" description="Helicase ATP-binding" evidence="15">
    <location>
        <begin position="1218"/>
        <end position="1351"/>
    </location>
</feature>
<feature type="domain" description="Helicase C-terminal" evidence="16">
    <location>
        <begin position="1362"/>
        <end position="1539"/>
    </location>
</feature>
<feature type="domain" description="RdRp catalytic" evidence="14">
    <location>
        <begin position="2637"/>
        <end position="2755"/>
    </location>
</feature>
<feature type="region of interest" description="Disordered" evidence="5">
    <location>
        <begin position="2"/>
        <end position="75"/>
    </location>
</feature>
<feature type="region of interest" description="Interaction with DDX3X" evidence="9">
    <location>
        <begin position="2"/>
        <end position="59"/>
    </location>
</feature>
<feature type="region of interest" description="Interaction with EIF2AK2/PKR" evidence="2">
    <location>
        <begin position="2"/>
        <end position="58"/>
    </location>
</feature>
<feature type="region of interest" description="Interaction with STAT1" evidence="2">
    <location>
        <begin position="2"/>
        <end position="23"/>
    </location>
</feature>
<feature type="region of interest" description="Important for endoplasmic reticulum and mitochondrial localization" evidence="2">
    <location>
        <begin position="112"/>
        <end position="152"/>
    </location>
</feature>
<feature type="region of interest" description="Interaction with APOA2" evidence="6">
    <location>
        <begin position="122"/>
        <end position="173"/>
    </location>
</feature>
<feature type="region of interest" description="Important for lipid droplets localization" evidence="5">
    <location>
        <begin position="164"/>
        <end position="167"/>
    </location>
</feature>
<feature type="region of interest" description="Important for fusion" evidence="5">
    <location>
        <begin position="265"/>
        <end position="296"/>
    </location>
</feature>
<feature type="region of interest" description="HVR1" evidence="5">
    <location>
        <begin position="385"/>
        <end position="412"/>
    </location>
</feature>
<feature type="region of interest" description="HVR2" evidence="5">
    <location>
        <begin position="475"/>
        <end position="479"/>
    </location>
</feature>
<feature type="region of interest" description="CD81-binding 1" evidence="3">
    <location>
        <begin position="481"/>
        <end position="494"/>
    </location>
</feature>
<feature type="region of interest" description="CD81-binding 2" evidence="3">
    <location>
        <begin position="545"/>
        <end position="552"/>
    </location>
</feature>
<feature type="region of interest" description="PKR/eIF2-alpha phosphorylation homology domain (PePHD)">
    <location>
        <begin position="661"/>
        <end position="672"/>
    </location>
</feature>
<feature type="region of interest" description="Protease NS2-3" evidence="3">
    <location>
        <begin position="905"/>
        <end position="1207"/>
    </location>
</feature>
<feature type="region of interest" description="Interaction with host SCPS1" evidence="11">
    <location>
        <begin position="930"/>
        <end position="950"/>
    </location>
</feature>
<feature type="region of interest" description="RNA-binding" evidence="3">
    <location>
        <begin position="1487"/>
        <end position="1499"/>
    </location>
</feature>
<feature type="region of interest" description="NS3-binding" evidence="5">
    <location>
        <begin position="1680"/>
        <end position="1691"/>
    </location>
</feature>
<feature type="region of interest" description="Transcriptional activation" evidence="13">
    <location>
        <begin position="2121"/>
        <end position="2334"/>
    </location>
</feature>
<feature type="region of interest" description="FKBP8-binding" evidence="2">
    <location>
        <begin position="2121"/>
        <end position="2209"/>
    </location>
</feature>
<feature type="region of interest" description="Interaction with non-structural protein 4A" evidence="2">
    <location>
        <begin position="2136"/>
        <end position="2140"/>
    </location>
</feature>
<feature type="region of interest" description="Interaction with host SKP2" evidence="5">
    <location>
        <begin position="2190"/>
        <end position="2441"/>
    </location>
</feature>
<feature type="region of interest" description="Interaction with EIF2AK2/PKR" evidence="3">
    <location>
        <begin position="2211"/>
        <end position="2276"/>
    </location>
</feature>
<feature type="region of interest" description="ISDR" evidence="2">
    <location>
        <begin position="2211"/>
        <end position="2250"/>
    </location>
</feature>
<feature type="region of interest" description="NS4B-binding" evidence="13">
    <location>
        <begin position="2250"/>
        <end position="2307"/>
    </location>
</feature>
<feature type="region of interest" description="V3">
    <location>
        <begin position="2300"/>
        <end position="2378"/>
    </location>
</feature>
<feature type="region of interest" description="Disordered" evidence="19">
    <location>
        <begin position="2315"/>
        <end position="2342"/>
    </location>
</feature>
<feature type="region of interest" description="Disordered" evidence="19">
    <location>
        <begin position="2359"/>
        <end position="2412"/>
    </location>
</feature>
<feature type="short sequence motif" description="Nuclear localization signal" evidence="11">
    <location>
        <begin position="5"/>
        <end position="13"/>
    </location>
</feature>
<feature type="short sequence motif" description="Nuclear localization signal" evidence="11">
    <location>
        <begin position="38"/>
        <end position="43"/>
    </location>
</feature>
<feature type="short sequence motif" description="Nuclear localization signal" evidence="11">
    <location>
        <begin position="58"/>
        <end position="64"/>
    </location>
</feature>
<feature type="short sequence motif" description="Nuclear localization signal" evidence="11">
    <location>
        <begin position="66"/>
        <end position="71"/>
    </location>
</feature>
<feature type="short sequence motif" description="DECH box" evidence="11">
    <location>
        <begin position="1317"/>
        <end position="1320"/>
    </location>
</feature>
<feature type="short sequence motif" description="SH3-binding" evidence="13">
    <location>
        <begin position="2323"/>
        <end position="2326"/>
    </location>
</feature>
<feature type="short sequence motif" description="Nuclear localization signal" evidence="2">
    <location>
        <begin position="2328"/>
        <end position="2337"/>
    </location>
</feature>
<feature type="compositionally biased region" description="Basic residues" evidence="19">
    <location>
        <begin position="7"/>
        <end position="16"/>
    </location>
</feature>
<feature type="compositionally biased region" description="Basic residues" evidence="19">
    <location>
        <begin position="58"/>
        <end position="72"/>
    </location>
</feature>
<feature type="compositionally biased region" description="Pro residues" evidence="19">
    <location>
        <begin position="2316"/>
        <end position="2327"/>
    </location>
</feature>
<feature type="compositionally biased region" description="Polar residues" evidence="19">
    <location>
        <begin position="2361"/>
        <end position="2375"/>
    </location>
</feature>
<feature type="compositionally biased region" description="Basic and acidic residues" evidence="19">
    <location>
        <begin position="2376"/>
        <end position="2385"/>
    </location>
</feature>
<feature type="active site" description="For protease NS2 activity; shared with dimeric partner" evidence="17">
    <location>
        <position position="953"/>
    </location>
</feature>
<feature type="active site" description="For protease NS2 activity; shared with dimeric partner" evidence="17">
    <location>
        <position position="973"/>
    </location>
</feature>
<feature type="active site" description="For protease NS2 activity; shared with dimeric partner" evidence="17">
    <location>
        <position position="994"/>
    </location>
</feature>
<feature type="active site" description="Charge relay system; for serine protease NS3 activity" evidence="18">
    <location>
        <position position="1084"/>
    </location>
</feature>
<feature type="active site" description="Charge relay system; for serine protease NS3 activity" evidence="18">
    <location>
        <position position="1108"/>
    </location>
</feature>
<feature type="active site" description="Charge relay system; for serine protease NS3 activity" evidence="18">
    <location>
        <position position="1166"/>
    </location>
</feature>
<feature type="binding site" evidence="18">
    <location>
        <position position="1124"/>
    </location>
    <ligand>
        <name>Zn(2+)</name>
        <dbReference type="ChEBI" id="CHEBI:29105"/>
        <label>1</label>
        <note>structural; for NS3 protease activity and NS2/3 auto-cleavage activity</note>
    </ligand>
</feature>
<feature type="binding site" evidence="18">
    <location>
        <position position="1126"/>
    </location>
    <ligand>
        <name>Zn(2+)</name>
        <dbReference type="ChEBI" id="CHEBI:29105"/>
        <label>1</label>
        <note>structural; for NS3 protease activity and NS2/3 auto-cleavage activity</note>
    </ligand>
</feature>
<feature type="binding site" evidence="18">
    <location>
        <position position="1172"/>
    </location>
    <ligand>
        <name>Zn(2+)</name>
        <dbReference type="ChEBI" id="CHEBI:29105"/>
        <label>1</label>
        <note>structural; for NS3 protease activity and NS2/3 auto-cleavage activity</note>
    </ligand>
</feature>
<feature type="binding site" evidence="18">
    <location>
        <position position="1176"/>
    </location>
    <ligand>
        <name>Zn(2+)</name>
        <dbReference type="ChEBI" id="CHEBI:29105"/>
        <label>1</label>
        <note>structural; for NS3 protease activity and NS2/3 auto-cleavage activity</note>
    </ligand>
</feature>
<feature type="binding site" evidence="15">
    <location>
        <begin position="1231"/>
        <end position="1238"/>
    </location>
    <ligand>
        <name>ATP</name>
        <dbReference type="ChEBI" id="CHEBI:30616"/>
    </ligand>
</feature>
<feature type="binding site" evidence="12">
    <location>
        <position position="1238"/>
    </location>
    <ligand>
        <name>Mg(2+)</name>
        <dbReference type="ChEBI" id="CHEBI:18420"/>
        <label>1</label>
        <note>catalytic; for NS3 helicase activity</note>
    </ligand>
</feature>
<feature type="binding site" evidence="12">
    <location>
        <position position="1318"/>
    </location>
    <ligand>
        <name>Mg(2+)</name>
        <dbReference type="ChEBI" id="CHEBI:18420"/>
        <label>1</label>
        <note>catalytic; for NS3 helicase activity</note>
    </ligand>
</feature>
<feature type="binding site" evidence="12">
    <location>
        <position position="2012"/>
    </location>
    <ligand>
        <name>Zn(2+)</name>
        <dbReference type="ChEBI" id="CHEBI:29105"/>
        <label>2</label>
        <note>structural</note>
    </ligand>
</feature>
<feature type="binding site" evidence="12">
    <location>
        <position position="2030"/>
    </location>
    <ligand>
        <name>Zn(2+)</name>
        <dbReference type="ChEBI" id="CHEBI:29105"/>
        <label>2</label>
        <note>structural</note>
    </ligand>
</feature>
<feature type="binding site" evidence="12">
    <location>
        <position position="2032"/>
    </location>
    <ligand>
        <name>Zn(2+)</name>
        <dbReference type="ChEBI" id="CHEBI:29105"/>
        <label>2</label>
        <note>structural</note>
    </ligand>
</feature>
<feature type="binding site" evidence="12">
    <location>
        <position position="2053"/>
    </location>
    <ligand>
        <name>Zn(2+)</name>
        <dbReference type="ChEBI" id="CHEBI:29105"/>
        <label>2</label>
        <note>structural</note>
    </ligand>
</feature>
<feature type="binding site" evidence="3">
    <location>
        <position position="2643"/>
    </location>
    <ligand>
        <name>Mg(2+)</name>
        <dbReference type="ChEBI" id="CHEBI:18420"/>
        <label>2</label>
        <note>catalytic; for RNA-directed RNA polymerase activity</note>
    </ligand>
</feature>
<feature type="binding site" evidence="3">
    <location>
        <position position="2741"/>
    </location>
    <ligand>
        <name>Mg(2+)</name>
        <dbReference type="ChEBI" id="CHEBI:18420"/>
        <label>2</label>
        <note>catalytic; for RNA-directed RNA polymerase activity</note>
    </ligand>
</feature>
<feature type="binding site" evidence="3">
    <location>
        <position position="2742"/>
    </location>
    <ligand>
        <name>Mg(2+)</name>
        <dbReference type="ChEBI" id="CHEBI:18420"/>
        <label>2</label>
        <note>catalytic; for RNA-directed RNA polymerase activity</note>
    </ligand>
</feature>
<feature type="site" description="Cleavage; by host signal peptide peptidase" evidence="2">
    <location>
        <begin position="177"/>
        <end position="178"/>
    </location>
</feature>
<feature type="site" description="Cleavage; by host signal peptidase" evidence="2">
    <location>
        <begin position="191"/>
        <end position="192"/>
    </location>
</feature>
<feature type="site" description="Cleavage; by host signal peptidase" evidence="2">
    <location>
        <begin position="383"/>
        <end position="384"/>
    </location>
</feature>
<feature type="site" description="Cleavage; by host signal peptidase">
    <location>
        <begin position="747"/>
        <end position="748"/>
    </location>
</feature>
<feature type="site" description="Cleavage; by host signal peptidase">
    <location>
        <begin position="810"/>
        <end position="811"/>
    </location>
</feature>
<feature type="site" description="Cleavage; by protease NS2" evidence="17">
    <location>
        <begin position="1027"/>
        <end position="1028"/>
    </location>
</feature>
<feature type="site" description="Cleavage; by serine protease NS3" evidence="5">
    <location>
        <begin position="1658"/>
        <end position="1659"/>
    </location>
</feature>
<feature type="site" description="Cleavage; by serine protease NS3" evidence="5">
    <location>
        <begin position="1712"/>
        <end position="1713"/>
    </location>
</feature>
<feature type="site" description="Cleavage; by serine protease NS3" evidence="5">
    <location>
        <begin position="1973"/>
        <end position="1974"/>
    </location>
</feature>
<feature type="site" description="Cleavage; by serine protease NS3" evidence="5">
    <location>
        <begin position="2423"/>
        <end position="2424"/>
    </location>
</feature>
<feature type="modified residue" description="N-acetylserine; by host" evidence="10">
    <location>
        <position position="2"/>
    </location>
</feature>
<feature type="modified residue" description="Phosphoserine; by host" evidence="7">
    <location>
        <position position="53"/>
    </location>
</feature>
<feature type="modified residue" description="Phosphoserine; by host" evidence="7">
    <location>
        <position position="99"/>
    </location>
</feature>
<feature type="modified residue" description="Phosphoserine; by host" evidence="7">
    <location>
        <position position="116"/>
    </location>
</feature>
<feature type="modified residue" description="Phosphoserine; by host" evidence="12">
    <location>
        <position position="2195"/>
    </location>
</feature>
<feature type="modified residue" description="Phosphoserine; by host" evidence="12">
    <location>
        <position position="2198"/>
    </location>
</feature>
<feature type="modified residue" description="Phosphoserine; by host" evidence="12">
    <location>
        <position position="2202"/>
    </location>
</feature>
<feature type="modified residue" description="Phosphoserine; by host" evidence="12">
    <location>
        <position position="2205"/>
    </location>
</feature>
<feature type="modified residue" description="Phosphoserine; by host" evidence="11">
    <location>
        <position position="2208"/>
    </location>
</feature>
<feature type="modified residue" description="Phosphoserine; by host" evidence="11">
    <location>
        <position position="2211"/>
    </location>
</feature>
<feature type="modified residue" description="Phosphoserine; by host" evidence="2">
    <location>
        <position position="2465"/>
    </location>
</feature>
<feature type="lipid moiety-binding region" description="S-palmitoyl cysteine; by host" evidence="5">
    <location>
        <position position="923"/>
    </location>
</feature>
<feature type="lipid moiety-binding region" description="S-palmitoyl cysteine; by host" evidence="5">
    <location>
        <position position="1973"/>
    </location>
</feature>
<feature type="glycosylation site" description="N-linked (GlcNAc...) asparagine; by host" evidence="5">
    <location>
        <position position="196"/>
    </location>
</feature>
<feature type="glycosylation site" description="N-linked (GlcNAc...) asparagine; by host" evidence="5">
    <location>
        <position position="209"/>
    </location>
</feature>
<feature type="glycosylation site" description="N-linked (GlcNAc...) asparagine; by host" evidence="5">
    <location>
        <position position="234"/>
    </location>
</feature>
<feature type="glycosylation site" description="N-linked (GlcNAc...) asparagine; by host" evidence="5">
    <location>
        <position position="305"/>
    </location>
</feature>
<feature type="glycosylation site" description="N-linked (GlcNAc...) (high mannose) asparagine; by host" evidence="5">
    <location>
        <position position="417"/>
    </location>
</feature>
<feature type="glycosylation site" description="N-linked (GlcNAc...) (high mannose) asparagine; by host" evidence="5">
    <location>
        <position position="423"/>
    </location>
</feature>
<feature type="glycosylation site" description="N-linked (GlcNAc...) (high mannose) asparagine; by host" evidence="5">
    <location>
        <position position="430"/>
    </location>
</feature>
<feature type="glycosylation site" description="N-linked (GlcNAc...) asparagine; by host" evidence="13">
    <location>
        <position position="448"/>
    </location>
</feature>
<feature type="glycosylation site" description="N-linked (GlcNAc...) asparagine; by host" evidence="13">
    <location>
        <position position="533"/>
    </location>
</feature>
<feature type="glycosylation site" description="N-linked (GlcNAc...) asparagine; by host" evidence="13">
    <location>
        <position position="557"/>
    </location>
</feature>
<feature type="glycosylation site" description="N-linked (GlcNAc...) asparagine; by host" evidence="13">
    <location>
        <position position="578"/>
    </location>
</feature>
<feature type="glycosylation site" description="N-linked (GlcNAc...) (high mannose) asparagine; by host" evidence="5">
    <location>
        <position position="624"/>
    </location>
</feature>
<feature type="glycosylation site" description="N-linked (GlcNAc...) (high mannose) asparagine; by host" evidence="5">
    <location>
        <position position="646"/>
    </location>
</feature>
<feature type="disulfide bond" evidence="5">
    <location>
        <begin position="429"/>
        <end position="553"/>
    </location>
</feature>
<feature type="disulfide bond" evidence="5">
    <location>
        <begin position="452"/>
        <end position="459"/>
    </location>
</feature>
<feature type="disulfide bond" evidence="5">
    <location>
        <begin position="487"/>
        <end position="495"/>
    </location>
</feature>
<feature type="disulfide bond" evidence="5">
    <location>
        <begin position="504"/>
        <end position="509"/>
    </location>
</feature>
<feature type="disulfide bond" evidence="5">
    <location>
        <begin position="565"/>
        <end position="570"/>
    </location>
</feature>
<feature type="disulfide bond" evidence="5">
    <location>
        <begin position="582"/>
        <end position="586"/>
    </location>
</feature>
<feature type="disulfide bond" evidence="5">
    <location>
        <begin position="598"/>
        <end position="621"/>
    </location>
</feature>
<feature type="disulfide bond" evidence="5">
    <location>
        <begin position="608"/>
        <end position="645"/>
    </location>
</feature>
<feature type="disulfide bond" evidence="5">
    <location>
        <begin position="653"/>
        <end position="678"/>
    </location>
</feature>
<feature type="helix" evidence="21">
    <location>
        <begin position="749"/>
        <end position="763"/>
    </location>
</feature>
<feature type="helix" evidence="21">
    <location>
        <begin position="766"/>
        <end position="787"/>
    </location>
</feature>
<feature type="helix" evidence="21">
    <location>
        <begin position="795"/>
        <end position="803"/>
    </location>
</feature>
<name>POLG_HCVEV</name>